<proteinExistence type="evidence at protein level"/>
<keyword id="KW-0002">3D-structure</keyword>
<keyword id="KW-0007">Acetylation</keyword>
<keyword id="KW-0025">Alternative splicing</keyword>
<keyword id="KW-0903">Direct protein sequencing</keyword>
<keyword id="KW-0945">Host-virus interaction</keyword>
<keyword id="KW-0539">Nucleus</keyword>
<keyword id="KW-0597">Phosphoprotein</keyword>
<keyword id="KW-1267">Proteomics identification</keyword>
<keyword id="KW-1185">Reference proteome</keyword>
<keyword id="KW-0804">Transcription</keyword>
<keyword id="KW-0805">Transcription regulation</keyword>
<keyword id="KW-0833">Ubl conjugation pathway</keyword>
<dbReference type="EMBL" id="L42856">
    <property type="protein sequence ID" value="AAA75522.1"/>
    <property type="molecule type" value="mRNA"/>
</dbReference>
<dbReference type="EMBL" id="BM700019">
    <property type="status" value="NOT_ANNOTATED_CDS"/>
    <property type="molecule type" value="mRNA"/>
</dbReference>
<dbReference type="EMBL" id="AC004493">
    <property type="protein sequence ID" value="AAC08452.1"/>
    <property type="status" value="ALT_SEQ"/>
    <property type="molecule type" value="Genomic_DNA"/>
</dbReference>
<dbReference type="EMBL" id="AC092117">
    <property type="status" value="NOT_ANNOTATED_CDS"/>
    <property type="molecule type" value="Genomic_DNA"/>
</dbReference>
<dbReference type="EMBL" id="CH471112">
    <property type="protein sequence ID" value="EAW85472.1"/>
    <property type="molecule type" value="Genomic_DNA"/>
</dbReference>
<dbReference type="EMBL" id="CH471112">
    <property type="protein sequence ID" value="EAW85474.1"/>
    <property type="molecule type" value="Genomic_DNA"/>
</dbReference>
<dbReference type="EMBL" id="BC013306">
    <property type="protein sequence ID" value="AAH13306.1"/>
    <property type="molecule type" value="mRNA"/>
</dbReference>
<dbReference type="EMBL" id="BC065000">
    <property type="protein sequence ID" value="AAH65000.1"/>
    <property type="molecule type" value="mRNA"/>
</dbReference>
<dbReference type="CCDS" id="CCDS32374.1">
    <molecule id="Q15370-2"/>
</dbReference>
<dbReference type="CCDS" id="CCDS45387.1">
    <molecule id="Q15370-1"/>
</dbReference>
<dbReference type="PIR" id="I59405">
    <property type="entry name" value="I59405"/>
</dbReference>
<dbReference type="RefSeq" id="NP_009039.1">
    <molecule id="Q15370-1"/>
    <property type="nucleotide sequence ID" value="NM_007108.4"/>
</dbReference>
<dbReference type="RefSeq" id="NP_996896.1">
    <molecule id="Q15370-2"/>
    <property type="nucleotide sequence ID" value="NM_207013.3"/>
</dbReference>
<dbReference type="PDB" id="1LM8">
    <property type="method" value="X-ray"/>
    <property type="resolution" value="1.85 A"/>
    <property type="chains" value="B=1-118"/>
</dbReference>
<dbReference type="PDB" id="1LQB">
    <property type="method" value="X-ray"/>
    <property type="resolution" value="2.00 A"/>
    <property type="chains" value="A=1-118"/>
</dbReference>
<dbReference type="PDB" id="1VCB">
    <property type="method" value="X-ray"/>
    <property type="resolution" value="2.70 A"/>
    <property type="chains" value="A/D/G/J=1-118"/>
</dbReference>
<dbReference type="PDB" id="2C9W">
    <property type="method" value="X-ray"/>
    <property type="resolution" value="1.90 A"/>
    <property type="chains" value="B=1-118"/>
</dbReference>
<dbReference type="PDB" id="2IZV">
    <property type="method" value="X-ray"/>
    <property type="resolution" value="2.55 A"/>
    <property type="chains" value="B=1-118"/>
</dbReference>
<dbReference type="PDB" id="2JZ3">
    <property type="method" value="NMR"/>
    <property type="chains" value="B=1-118"/>
</dbReference>
<dbReference type="PDB" id="2MA9">
    <property type="method" value="NMR"/>
    <property type="chains" value="B=1-118"/>
</dbReference>
<dbReference type="PDB" id="3DCG">
    <property type="method" value="X-ray"/>
    <property type="resolution" value="2.40 A"/>
    <property type="chains" value="A/C=1-118"/>
</dbReference>
<dbReference type="PDB" id="3ZKJ">
    <property type="method" value="X-ray"/>
    <property type="resolution" value="2.58 A"/>
    <property type="chains" value="C/F=1-118"/>
</dbReference>
<dbReference type="PDB" id="3ZNG">
    <property type="method" value="X-ray"/>
    <property type="resolution" value="2.85 A"/>
    <property type="chains" value="C/F=1-118"/>
</dbReference>
<dbReference type="PDB" id="3ZRC">
    <property type="method" value="X-ray"/>
    <property type="resolution" value="2.90 A"/>
    <property type="chains" value="A/D/G/J=1-118"/>
</dbReference>
<dbReference type="PDB" id="3ZRF">
    <property type="method" value="X-ray"/>
    <property type="resolution" value="2.80 A"/>
    <property type="chains" value="A/D/G/J=1-118"/>
</dbReference>
<dbReference type="PDB" id="3ZTC">
    <property type="method" value="X-ray"/>
    <property type="resolution" value="2.65 A"/>
    <property type="chains" value="A/D/G/J=1-118"/>
</dbReference>
<dbReference type="PDB" id="3ZTD">
    <property type="method" value="X-ray"/>
    <property type="resolution" value="2.79 A"/>
    <property type="chains" value="A/D/G/J=1-118"/>
</dbReference>
<dbReference type="PDB" id="3ZUN">
    <property type="method" value="X-ray"/>
    <property type="resolution" value="2.50 A"/>
    <property type="chains" value="A/D/G/J=1-118"/>
</dbReference>
<dbReference type="PDB" id="4AJY">
    <property type="method" value="X-ray"/>
    <property type="resolution" value="1.73 A"/>
    <property type="chains" value="B=1-118"/>
</dbReference>
<dbReference type="PDB" id="4AWJ">
    <property type="method" value="X-ray"/>
    <property type="resolution" value="2.50 A"/>
    <property type="chains" value="A/D/G/J=1-104"/>
</dbReference>
<dbReference type="PDB" id="4B95">
    <property type="method" value="X-ray"/>
    <property type="resolution" value="2.80 A"/>
    <property type="chains" value="A/D/G/J=1-118"/>
</dbReference>
<dbReference type="PDB" id="4B9K">
    <property type="method" value="X-ray"/>
    <property type="resolution" value="2.00 A"/>
    <property type="chains" value="A/D/G/J=1-104"/>
</dbReference>
<dbReference type="PDB" id="4BKS">
    <property type="method" value="X-ray"/>
    <property type="resolution" value="2.20 A"/>
    <property type="chains" value="A/D/G/J=1-104"/>
</dbReference>
<dbReference type="PDB" id="4BKT">
    <property type="method" value="X-ray"/>
    <property type="resolution" value="2.35 A"/>
    <property type="chains" value="A/D/G/J=1-104"/>
</dbReference>
<dbReference type="PDB" id="4N9F">
    <property type="method" value="X-ray"/>
    <property type="resolution" value="3.30 A"/>
    <property type="chains" value="4/D/H/J/P/W/X/e/g/m/s/y=1-102"/>
</dbReference>
<dbReference type="PDB" id="4W9C">
    <property type="method" value="X-ray"/>
    <property type="resolution" value="2.20 A"/>
    <property type="chains" value="A/D/G/J=1-104"/>
</dbReference>
<dbReference type="PDB" id="4W9D">
    <property type="method" value="X-ray"/>
    <property type="resolution" value="2.20 A"/>
    <property type="chains" value="A/D/G/J=1-104"/>
</dbReference>
<dbReference type="PDB" id="4W9E">
    <property type="method" value="X-ray"/>
    <property type="resolution" value="2.60 A"/>
    <property type="chains" value="A/D/G/J=1-104"/>
</dbReference>
<dbReference type="PDB" id="4W9F">
    <property type="method" value="X-ray"/>
    <property type="resolution" value="2.10 A"/>
    <property type="chains" value="A/D/G/J=1-104"/>
</dbReference>
<dbReference type="PDB" id="4W9G">
    <property type="method" value="X-ray"/>
    <property type="resolution" value="2.70 A"/>
    <property type="chains" value="A/D/G/J=1-104"/>
</dbReference>
<dbReference type="PDB" id="4W9H">
    <property type="method" value="X-ray"/>
    <property type="resolution" value="2.10 A"/>
    <property type="chains" value="A/D/G/J=1-104"/>
</dbReference>
<dbReference type="PDB" id="4W9I">
    <property type="method" value="X-ray"/>
    <property type="resolution" value="2.40 A"/>
    <property type="chains" value="A/D/G/J=1-104"/>
</dbReference>
<dbReference type="PDB" id="4W9J">
    <property type="method" value="X-ray"/>
    <property type="resolution" value="2.20 A"/>
    <property type="chains" value="A/D/G/J=1-104"/>
</dbReference>
<dbReference type="PDB" id="4W9K">
    <property type="method" value="X-ray"/>
    <property type="resolution" value="2.10 A"/>
    <property type="chains" value="A/D/G/J=1-104"/>
</dbReference>
<dbReference type="PDB" id="4W9L">
    <property type="method" value="X-ray"/>
    <property type="resolution" value="2.20 A"/>
    <property type="chains" value="A/D/G/J=1-104"/>
</dbReference>
<dbReference type="PDB" id="4WQO">
    <property type="method" value="X-ray"/>
    <property type="resolution" value="3.20 A"/>
    <property type="chains" value="B=1-118"/>
</dbReference>
<dbReference type="PDB" id="5BO4">
    <property type="method" value="X-ray"/>
    <property type="resolution" value="2.90 A"/>
    <property type="chains" value="B/E/H/K/N/Q=1-104"/>
</dbReference>
<dbReference type="PDB" id="5LLI">
    <property type="method" value="X-ray"/>
    <property type="resolution" value="2.40 A"/>
    <property type="chains" value="A/D/G/J=1-104"/>
</dbReference>
<dbReference type="PDB" id="5N4W">
    <property type="method" value="X-ray"/>
    <property type="resolution" value="3.90 A"/>
    <property type="chains" value="B=1-104"/>
</dbReference>
<dbReference type="PDB" id="5NVV">
    <property type="method" value="X-ray"/>
    <property type="resolution" value="2.10 A"/>
    <property type="chains" value="A/D/G/J=1-104"/>
</dbReference>
<dbReference type="PDB" id="5NVW">
    <property type="method" value="X-ray"/>
    <property type="resolution" value="2.20 A"/>
    <property type="chains" value="A/D/G/J=1-104"/>
</dbReference>
<dbReference type="PDB" id="5NVX">
    <property type="method" value="X-ray"/>
    <property type="resolution" value="2.20 A"/>
    <property type="chains" value="A/D/G/J=1-104"/>
</dbReference>
<dbReference type="PDB" id="5NVY">
    <property type="method" value="X-ray"/>
    <property type="resolution" value="2.90 A"/>
    <property type="chains" value="A/D/G/J=1-104"/>
</dbReference>
<dbReference type="PDB" id="5NVZ">
    <property type="method" value="X-ray"/>
    <property type="resolution" value="2.70 A"/>
    <property type="chains" value="A/D/G/J=1-104"/>
</dbReference>
<dbReference type="PDB" id="5NW0">
    <property type="method" value="X-ray"/>
    <property type="resolution" value="2.30 A"/>
    <property type="chains" value="A/D/G/J=1-104"/>
</dbReference>
<dbReference type="PDB" id="5NW1">
    <property type="method" value="X-ray"/>
    <property type="resolution" value="2.10 A"/>
    <property type="chains" value="A/D/G/J=1-104"/>
</dbReference>
<dbReference type="PDB" id="5NW2">
    <property type="method" value="X-ray"/>
    <property type="resolution" value="2.20 A"/>
    <property type="chains" value="A/D/G/J=1-104"/>
</dbReference>
<dbReference type="PDB" id="5T35">
    <property type="method" value="X-ray"/>
    <property type="resolution" value="2.70 A"/>
    <property type="chains" value="B/F=1-104"/>
</dbReference>
<dbReference type="PDB" id="6BVB">
    <property type="method" value="X-ray"/>
    <property type="resolution" value="2.00 A"/>
    <property type="chains" value="B=1-118"/>
</dbReference>
<dbReference type="PDB" id="6C5X">
    <property type="method" value="X-ray"/>
    <property type="resolution" value="3.10 A"/>
    <property type="chains" value="B/E=1-118"/>
</dbReference>
<dbReference type="PDB" id="6FMI">
    <property type="method" value="X-ray"/>
    <property type="resolution" value="2.80 A"/>
    <property type="chains" value="A/D=1-104"/>
</dbReference>
<dbReference type="PDB" id="6FMJ">
    <property type="method" value="X-ray"/>
    <property type="resolution" value="2.45 A"/>
    <property type="chains" value="A/D/G/J=1-104"/>
</dbReference>
<dbReference type="PDB" id="6FMK">
    <property type="method" value="X-ray"/>
    <property type="resolution" value="2.75 A"/>
    <property type="chains" value="A/D/G/J=1-104"/>
</dbReference>
<dbReference type="PDB" id="6GFX">
    <property type="method" value="X-ray"/>
    <property type="resolution" value="1.83 A"/>
    <property type="chains" value="A=1-104"/>
</dbReference>
<dbReference type="PDB" id="6GFY">
    <property type="method" value="X-ray"/>
    <property type="resolution" value="2.70 A"/>
    <property type="chains" value="A/D/G/J=1-104"/>
</dbReference>
<dbReference type="PDB" id="6GFZ">
    <property type="method" value="X-ray"/>
    <property type="resolution" value="2.30 A"/>
    <property type="chains" value="A/D/G/J=1-104"/>
</dbReference>
<dbReference type="PDB" id="6GMN">
    <property type="method" value="X-ray"/>
    <property type="resolution" value="1.94 A"/>
    <property type="chains" value="A/D/G/J=1-104"/>
</dbReference>
<dbReference type="PDB" id="6GMQ">
    <property type="method" value="X-ray"/>
    <property type="resolution" value="2.75 A"/>
    <property type="chains" value="A/D/G/J=1-104"/>
</dbReference>
<dbReference type="PDB" id="6GMR">
    <property type="method" value="X-ray"/>
    <property type="resolution" value="1.75 A"/>
    <property type="chains" value="B=1-118"/>
</dbReference>
<dbReference type="PDB" id="6GMX">
    <property type="method" value="X-ray"/>
    <property type="resolution" value="2.53 A"/>
    <property type="chains" value="A/D/G/J=1-104"/>
</dbReference>
<dbReference type="PDB" id="6HAX">
    <property type="method" value="X-ray"/>
    <property type="resolution" value="2.35 A"/>
    <property type="chains" value="D/H=1-104"/>
</dbReference>
<dbReference type="PDB" id="6HAY">
    <property type="method" value="X-ray"/>
    <property type="resolution" value="2.24 A"/>
    <property type="chains" value="D/H=1-104"/>
</dbReference>
<dbReference type="PDB" id="6HR2">
    <property type="method" value="X-ray"/>
    <property type="resolution" value="1.76 A"/>
    <property type="chains" value="D/H=1-104"/>
</dbReference>
<dbReference type="PDB" id="6I4X">
    <property type="method" value="X-ray"/>
    <property type="resolution" value="2.69 A"/>
    <property type="chains" value="B=1-104"/>
</dbReference>
<dbReference type="PDB" id="6I5J">
    <property type="method" value="X-ray"/>
    <property type="resolution" value="2.80 A"/>
    <property type="chains" value="B/E=1-104"/>
</dbReference>
<dbReference type="PDB" id="6I5N">
    <property type="method" value="X-ray"/>
    <property type="resolution" value="1.98 A"/>
    <property type="chains" value="B/E=1-104"/>
</dbReference>
<dbReference type="PDB" id="6I7Q">
    <property type="method" value="X-ray"/>
    <property type="resolution" value="1.80 A"/>
    <property type="chains" value="B=1-118"/>
</dbReference>
<dbReference type="PDB" id="6I7R">
    <property type="method" value="X-ray"/>
    <property type="resolution" value="1.95 A"/>
    <property type="chains" value="B=1-118"/>
</dbReference>
<dbReference type="PDB" id="6P59">
    <property type="method" value="X-ray"/>
    <property type="resolution" value="2.94 A"/>
    <property type="chains" value="D/W=1-118"/>
</dbReference>
<dbReference type="PDB" id="6R6H">
    <property type="method" value="EM"/>
    <property type="resolution" value="8.40 A"/>
    <property type="chains" value="P=1-104"/>
</dbReference>
<dbReference type="PDB" id="6R7F">
    <property type="method" value="EM"/>
    <property type="resolution" value="8.20 A"/>
    <property type="chains" value="P=1-118"/>
</dbReference>
<dbReference type="PDB" id="6R7H">
    <property type="method" value="EM"/>
    <property type="resolution" value="8.80 A"/>
    <property type="chains" value="P=1-104"/>
</dbReference>
<dbReference type="PDB" id="6R7I">
    <property type="method" value="EM"/>
    <property type="resolution" value="5.90 A"/>
    <property type="chains" value="P=1-106"/>
</dbReference>
<dbReference type="PDB" id="6R7N">
    <property type="method" value="EM"/>
    <property type="resolution" value="6.50 A"/>
    <property type="chains" value="P=1-104"/>
</dbReference>
<dbReference type="PDB" id="6SIS">
    <property type="method" value="X-ray"/>
    <property type="resolution" value="3.50 A"/>
    <property type="chains" value="B/F=1-104"/>
</dbReference>
<dbReference type="PDB" id="6V9H">
    <property type="method" value="EM"/>
    <property type="resolution" value="4.10 A"/>
    <property type="chains" value="E=1-118"/>
</dbReference>
<dbReference type="PDB" id="6ZHC">
    <property type="method" value="X-ray"/>
    <property type="resolution" value="1.92 A"/>
    <property type="chains" value="BBB=1-107"/>
</dbReference>
<dbReference type="PDB" id="7CJB">
    <property type="method" value="X-ray"/>
    <property type="resolution" value="2.80 A"/>
    <property type="chains" value="B/F/J/N=1-118"/>
</dbReference>
<dbReference type="PDB" id="7JTO">
    <property type="method" value="X-ray"/>
    <property type="resolution" value="1.70 A"/>
    <property type="chains" value="J=1-104"/>
</dbReference>
<dbReference type="PDB" id="7JTP">
    <property type="method" value="X-ray"/>
    <property type="resolution" value="2.12 A"/>
    <property type="chains" value="J=1-104"/>
</dbReference>
<dbReference type="PDB" id="7KHH">
    <property type="method" value="X-ray"/>
    <property type="resolution" value="2.28 A"/>
    <property type="chains" value="A=1-118"/>
</dbReference>
<dbReference type="PDB" id="7M6T">
    <property type="method" value="X-ray"/>
    <property type="resolution" value="3.19 A"/>
    <property type="chains" value="B=1-118"/>
</dbReference>
<dbReference type="PDB" id="7PI4">
    <property type="method" value="X-ray"/>
    <property type="resolution" value="2.24 A"/>
    <property type="chains" value="BBB=1-105"/>
</dbReference>
<dbReference type="PDB" id="7PLO">
    <property type="method" value="EM"/>
    <property type="resolution" value="2.80 A"/>
    <property type="chains" value="P=1-118"/>
</dbReference>
<dbReference type="PDB" id="7Q2J">
    <property type="method" value="X-ray"/>
    <property type="resolution" value="2.50 A"/>
    <property type="chains" value="A=1-104"/>
</dbReference>
<dbReference type="PDB" id="7S4E">
    <property type="method" value="X-ray"/>
    <property type="resolution" value="2.25 A"/>
    <property type="chains" value="D/H=1-104"/>
</dbReference>
<dbReference type="PDB" id="7UPN">
    <property type="method" value="EM"/>
    <property type="resolution" value="3.50 A"/>
    <property type="chains" value="H/I=1-118"/>
</dbReference>
<dbReference type="PDB" id="7Z6L">
    <property type="method" value="X-ray"/>
    <property type="resolution" value="2.24 A"/>
    <property type="chains" value="D=1-104"/>
</dbReference>
<dbReference type="PDB" id="7Z76">
    <property type="method" value="X-ray"/>
    <property type="resolution" value="1.32 A"/>
    <property type="chains" value="A=1-104"/>
</dbReference>
<dbReference type="PDB" id="7Z77">
    <property type="method" value="X-ray"/>
    <property type="resolution" value="1.97 A"/>
    <property type="chains" value="A=1-104"/>
</dbReference>
<dbReference type="PDB" id="7ZLM">
    <property type="method" value="X-ray"/>
    <property type="resolution" value="1.79 A"/>
    <property type="chains" value="B/E/H/K=1-118"/>
</dbReference>
<dbReference type="PDB" id="7ZLN">
    <property type="method" value="X-ray"/>
    <property type="resolution" value="2.60 A"/>
    <property type="chains" value="B=1-118"/>
</dbReference>
<dbReference type="PDB" id="7ZLO">
    <property type="method" value="X-ray"/>
    <property type="resolution" value="2.22 A"/>
    <property type="chains" value="B=1-118"/>
</dbReference>
<dbReference type="PDB" id="7ZLP">
    <property type="method" value="X-ray"/>
    <property type="resolution" value="1.94 A"/>
    <property type="chains" value="B=1-118"/>
</dbReference>
<dbReference type="PDB" id="7ZLR">
    <property type="method" value="X-ray"/>
    <property type="resolution" value="2.01 A"/>
    <property type="chains" value="B=1-118"/>
</dbReference>
<dbReference type="PDB" id="7ZLS">
    <property type="method" value="X-ray"/>
    <property type="resolution" value="1.92 A"/>
    <property type="chains" value="B/E/H/K=1-118"/>
</dbReference>
<dbReference type="PDB" id="7ZNT">
    <property type="method" value="X-ray"/>
    <property type="resolution" value="3.00 A"/>
    <property type="chains" value="A/D=1-104"/>
</dbReference>
<dbReference type="PDB" id="8BB2">
    <property type="method" value="X-ray"/>
    <property type="resolution" value="2.05 A"/>
    <property type="chains" value="J=1-104"/>
</dbReference>
<dbReference type="PDB" id="8BB3">
    <property type="method" value="X-ray"/>
    <property type="resolution" value="1.80 A"/>
    <property type="chains" value="J=1-104"/>
</dbReference>
<dbReference type="PDB" id="8BB4">
    <property type="method" value="X-ray"/>
    <property type="resolution" value="2.80 A"/>
    <property type="chains" value="I=1-104"/>
</dbReference>
<dbReference type="PDB" id="8BB5">
    <property type="method" value="X-ray"/>
    <property type="resolution" value="2.20 A"/>
    <property type="chains" value="A=1-104"/>
</dbReference>
<dbReference type="PDB" id="8BDI">
    <property type="method" value="X-ray"/>
    <property type="resolution" value="2.11 A"/>
    <property type="chains" value="A/D/G/J=1-104"/>
</dbReference>
<dbReference type="PDB" id="8BDJ">
    <property type="method" value="X-ray"/>
    <property type="resolution" value="2.02 A"/>
    <property type="chains" value="A/D/G/J=1-104"/>
</dbReference>
<dbReference type="PDB" id="8BDL">
    <property type="method" value="X-ray"/>
    <property type="resolution" value="2.29 A"/>
    <property type="chains" value="A/D/G/J=1-104"/>
</dbReference>
<dbReference type="PDB" id="8BDM">
    <property type="method" value="X-ray"/>
    <property type="resolution" value="2.02 A"/>
    <property type="chains" value="A/D/G/J=1-104"/>
</dbReference>
<dbReference type="PDB" id="8BDN">
    <property type="method" value="X-ray"/>
    <property type="resolution" value="2.76 A"/>
    <property type="chains" value="A/D/G/J=1-104"/>
</dbReference>
<dbReference type="PDB" id="8BDO">
    <property type="method" value="X-ray"/>
    <property type="resolution" value="2.80 A"/>
    <property type="chains" value="A/D=1-104"/>
</dbReference>
<dbReference type="PDB" id="8BDS">
    <property type="method" value="X-ray"/>
    <property type="resolution" value="1.72 A"/>
    <property type="chains" value="A=1-104"/>
</dbReference>
<dbReference type="PDB" id="8BDT">
    <property type="method" value="X-ray"/>
    <property type="resolution" value="2.70 A"/>
    <property type="chains" value="B/F=1-104"/>
</dbReference>
<dbReference type="PDB" id="8BDX">
    <property type="method" value="X-ray"/>
    <property type="resolution" value="2.93 A"/>
    <property type="chains" value="B/F=1-104"/>
</dbReference>
<dbReference type="PDB" id="8BEB">
    <property type="method" value="X-ray"/>
    <property type="resolution" value="3.18 A"/>
    <property type="chains" value="A=1-104"/>
</dbReference>
<dbReference type="PDB" id="8C13">
    <property type="method" value="X-ray"/>
    <property type="resolution" value="2.30 A"/>
    <property type="chains" value="J=1-118"/>
</dbReference>
<dbReference type="PDB" id="8CQE">
    <property type="method" value="X-ray"/>
    <property type="resolution" value="2.85 A"/>
    <property type="chains" value="A/D/G/J=1-104"/>
</dbReference>
<dbReference type="PDB" id="8CQK">
    <property type="method" value="X-ray"/>
    <property type="resolution" value="2.62 A"/>
    <property type="chains" value="A/D/G/J=1-104"/>
</dbReference>
<dbReference type="PDB" id="8CQL">
    <property type="method" value="X-ray"/>
    <property type="resolution" value="2.38 A"/>
    <property type="chains" value="A/D/G/J=1-104"/>
</dbReference>
<dbReference type="PDB" id="8CX0">
    <property type="method" value="EM"/>
    <property type="resolution" value="2.70 A"/>
    <property type="chains" value="D=1-118"/>
</dbReference>
<dbReference type="PDB" id="8CX1">
    <property type="method" value="EM"/>
    <property type="resolution" value="3.30 A"/>
    <property type="chains" value="D/I=1-118"/>
</dbReference>
<dbReference type="PDB" id="8CX2">
    <property type="method" value="EM"/>
    <property type="resolution" value="3.20 A"/>
    <property type="chains" value="D/I=1-118"/>
</dbReference>
<dbReference type="PDB" id="8EBN">
    <property type="method" value="X-ray"/>
    <property type="resolution" value="2.60 A"/>
    <property type="chains" value="C/E=1-104"/>
</dbReference>
<dbReference type="PDB" id="8EI3">
    <property type="method" value="X-ray"/>
    <property type="resolution" value="3.49 A"/>
    <property type="chains" value="A/D=1-118"/>
</dbReference>
<dbReference type="PDB" id="8EWV">
    <property type="method" value="X-ray"/>
    <property type="resolution" value="3.40 A"/>
    <property type="chains" value="A/E/I/M/Q/U=1-118"/>
</dbReference>
<dbReference type="PDB" id="8FVI">
    <property type="method" value="EM"/>
    <property type="resolution" value="3.24 A"/>
    <property type="chains" value="y=1-102"/>
</dbReference>
<dbReference type="PDB" id="8FVJ">
    <property type="method" value="EM"/>
    <property type="resolution" value="3.54 A"/>
    <property type="chains" value="3/8=1-102"/>
</dbReference>
<dbReference type="PDB" id="8FY0">
    <property type="method" value="X-ray"/>
    <property type="resolution" value="2.94 A"/>
    <property type="chains" value="B=1-118"/>
</dbReference>
<dbReference type="PDB" id="8FY1">
    <property type="method" value="X-ray"/>
    <property type="resolution" value="2.56 A"/>
    <property type="chains" value="B=1-118"/>
</dbReference>
<dbReference type="PDB" id="8FY2">
    <property type="method" value="X-ray"/>
    <property type="resolution" value="2.98 A"/>
    <property type="chains" value="B=1-118"/>
</dbReference>
<dbReference type="PDB" id="8G1P">
    <property type="method" value="X-ray"/>
    <property type="resolution" value="2.70 A"/>
    <property type="chains" value="A/D=1-118"/>
</dbReference>
<dbReference type="PDB" id="8G1Q">
    <property type="method" value="X-ray"/>
    <property type="resolution" value="3.73 A"/>
    <property type="chains" value="A=1-104"/>
</dbReference>
<dbReference type="PDB" id="8IJ1">
    <property type="method" value="EM"/>
    <property type="resolution" value="4.20 A"/>
    <property type="chains" value="B/G=1-104"/>
</dbReference>
<dbReference type="PDB" id="8JAL">
    <property type="method" value="EM"/>
    <property type="resolution" value="3.30 A"/>
    <property type="chains" value="C/G=1-118"/>
</dbReference>
<dbReference type="PDB" id="8JAQ">
    <property type="method" value="EM"/>
    <property type="resolution" value="3.26 A"/>
    <property type="chains" value="C/G/M/Q=1-118"/>
</dbReference>
<dbReference type="PDB" id="8JAR">
    <property type="method" value="EM"/>
    <property type="resolution" value="3.30 A"/>
    <property type="chains" value="C/G=1-118"/>
</dbReference>
<dbReference type="PDB" id="8JAS">
    <property type="method" value="EM"/>
    <property type="resolution" value="3.54 A"/>
    <property type="chains" value="C/G/M/Q=1-118"/>
</dbReference>
<dbReference type="PDB" id="8JAU">
    <property type="method" value="EM"/>
    <property type="resolution" value="3.22 A"/>
    <property type="chains" value="C/G=1-118"/>
</dbReference>
<dbReference type="PDB" id="8JAV">
    <property type="method" value="EM"/>
    <property type="resolution" value="3.44 A"/>
    <property type="chains" value="C/G/M/Q=1-118"/>
</dbReference>
<dbReference type="PDB" id="8JE1">
    <property type="method" value="EM"/>
    <property type="resolution" value="3.95 A"/>
    <property type="chains" value="B/G=1-104"/>
</dbReference>
<dbReference type="PDB" id="8JE2">
    <property type="method" value="EM"/>
    <property type="resolution" value="3.63 A"/>
    <property type="chains" value="B=1-104"/>
</dbReference>
<dbReference type="PDB" id="8OEV">
    <property type="method" value="EM"/>
    <property type="resolution" value="2.86 A"/>
    <property type="chains" value="Q=1-118"/>
</dbReference>
<dbReference type="PDB" id="8OEW">
    <property type="method" value="EM"/>
    <property type="resolution" value="2.80 A"/>
    <property type="chains" value="Q=1-118"/>
</dbReference>
<dbReference type="PDB" id="8OF0">
    <property type="method" value="EM"/>
    <property type="resolution" value="3.05 A"/>
    <property type="chains" value="Q=1-118"/>
</dbReference>
<dbReference type="PDB" id="8OKX">
    <property type="method" value="EM"/>
    <property type="resolution" value="3.51 A"/>
    <property type="chains" value="D=1-118"/>
</dbReference>
<dbReference type="PDB" id="8OL1">
    <property type="method" value="EM"/>
    <property type="resolution" value="3.50 A"/>
    <property type="chains" value="N=1-118"/>
</dbReference>
<dbReference type="PDB" id="8P0F">
    <property type="method" value="X-ray"/>
    <property type="resolution" value="1.98 A"/>
    <property type="chains" value="C/F=1-104"/>
</dbReference>
<dbReference type="PDB" id="8PC2">
    <property type="method" value="X-ray"/>
    <property type="resolution" value="2.80 A"/>
    <property type="chains" value="D/F=1-104"/>
</dbReference>
<dbReference type="PDB" id="8PQL">
    <property type="method" value="EM"/>
    <property type="resolution" value="3.76 A"/>
    <property type="chains" value="G=1-118"/>
</dbReference>
<dbReference type="PDB" id="8Q7R">
    <property type="method" value="EM"/>
    <property type="resolution" value="3.71 A"/>
    <property type="chains" value="G=1-118"/>
</dbReference>
<dbReference type="PDB" id="8QJR">
    <property type="method" value="X-ray"/>
    <property type="resolution" value="3.17 A"/>
    <property type="chains" value="A/D=1-104"/>
</dbReference>
<dbReference type="PDB" id="8QJS">
    <property type="method" value="X-ray"/>
    <property type="resolution" value="3.19 A"/>
    <property type="chains" value="A/D/G/J=1-104"/>
</dbReference>
<dbReference type="PDB" id="8QU8">
    <property type="method" value="EM"/>
    <property type="resolution" value="3.50 A"/>
    <property type="chains" value="B=2-118"/>
</dbReference>
<dbReference type="PDB" id="8QVU">
    <property type="method" value="X-ray"/>
    <property type="resolution" value="2.24 A"/>
    <property type="chains" value="D/H=1-104"/>
</dbReference>
<dbReference type="PDB" id="8QW6">
    <property type="method" value="X-ray"/>
    <property type="resolution" value="2.20 A"/>
    <property type="chains" value="D/H=1-104"/>
</dbReference>
<dbReference type="PDB" id="8QW7">
    <property type="method" value="X-ray"/>
    <property type="resolution" value="2.36 A"/>
    <property type="chains" value="D/H=1-104"/>
</dbReference>
<dbReference type="PDB" id="8R5H">
    <property type="method" value="EM"/>
    <property type="resolution" value="3.44 A"/>
    <property type="chains" value="G=1-118"/>
</dbReference>
<dbReference type="PDB" id="8RWZ">
    <property type="method" value="EM"/>
    <property type="resolution" value="4.00 A"/>
    <property type="chains" value="C=1-104"/>
</dbReference>
<dbReference type="PDB" id="8RX0">
    <property type="method" value="EM"/>
    <property type="resolution" value="3.70 A"/>
    <property type="chains" value="C=1-104"/>
</dbReference>
<dbReference type="PDB" id="8SH2">
    <property type="method" value="EM"/>
    <property type="resolution" value="3.74 A"/>
    <property type="chains" value="E/G/I/K=1-104"/>
</dbReference>
<dbReference type="PDB" id="8SZK">
    <property type="method" value="EM"/>
    <property type="resolution" value="3.58 A"/>
    <property type="chains" value="A=1-118"/>
</dbReference>
<dbReference type="PDB" id="8VL9">
    <property type="method" value="X-ray"/>
    <property type="resolution" value="2.50 A"/>
    <property type="chains" value="B=1-118"/>
</dbReference>
<dbReference type="PDB" id="8VLB">
    <property type="method" value="X-ray"/>
    <property type="resolution" value="2.90 A"/>
    <property type="chains" value="B=1-118"/>
</dbReference>
<dbReference type="PDB" id="8WDK">
    <property type="method" value="EM"/>
    <property type="resolution" value="3.64 A"/>
    <property type="chains" value="B=1-104"/>
</dbReference>
<dbReference type="PDB" id="8WQA">
    <property type="method" value="EM"/>
    <property type="resolution" value="3.39 A"/>
    <property type="chains" value="F/H=1-118"/>
</dbReference>
<dbReference type="PDB" id="8WQB">
    <property type="method" value="EM"/>
    <property type="resolution" value="3.37 A"/>
    <property type="chains" value="D/H=1-118"/>
</dbReference>
<dbReference type="PDB" id="8WQC">
    <property type="method" value="EM"/>
    <property type="resolution" value="3.54 A"/>
    <property type="chains" value="D/I=1-118"/>
</dbReference>
<dbReference type="PDB" id="8WQE">
    <property type="method" value="EM"/>
    <property type="resolution" value="3.38 A"/>
    <property type="chains" value="F/H=1-118"/>
</dbReference>
<dbReference type="PDB" id="8WQF">
    <property type="method" value="EM"/>
    <property type="resolution" value="3.27 A"/>
    <property type="chains" value="D/H=1-118"/>
</dbReference>
<dbReference type="PDB" id="8WQG">
    <property type="method" value="EM"/>
    <property type="resolution" value="4.09 A"/>
    <property type="chains" value="D/I=1-118"/>
</dbReference>
<dbReference type="PDB" id="8WQH">
    <property type="method" value="EM"/>
    <property type="resolution" value="3.44 A"/>
    <property type="chains" value="F/K=1-118"/>
</dbReference>
<dbReference type="PDB" id="8Y1U">
    <property type="method" value="X-ray"/>
    <property type="resolution" value="2.41 A"/>
    <property type="chains" value="C=1-104"/>
</dbReference>
<dbReference type="PDB" id="8YMB">
    <property type="method" value="X-ray"/>
    <property type="resolution" value="2.95 A"/>
    <property type="chains" value="B/G=1-118"/>
</dbReference>
<dbReference type="PDB" id="8ZV8">
    <property type="method" value="X-ray"/>
    <property type="resolution" value="2.46 A"/>
    <property type="chains" value="A/D/G/J=1-104"/>
</dbReference>
<dbReference type="PDB" id="8ZVJ">
    <property type="method" value="X-ray"/>
    <property type="resolution" value="2.60 A"/>
    <property type="chains" value="A/D/G/J=1-104"/>
</dbReference>
<dbReference type="PDB" id="9BJU">
    <property type="method" value="X-ray"/>
    <property type="resolution" value="2.47 A"/>
    <property type="chains" value="A/D/G/J=1-104"/>
</dbReference>
<dbReference type="PDB" id="9BOL">
    <property type="method" value="X-ray"/>
    <property type="resolution" value="1.99 A"/>
    <property type="chains" value="A/D=1-104"/>
</dbReference>
<dbReference type="PDB" id="9D1I">
    <property type="method" value="X-ray"/>
    <property type="resolution" value="2.00 A"/>
    <property type="chains" value="B=1-104"/>
</dbReference>
<dbReference type="PDB" id="9D1Y">
    <property type="method" value="X-ray"/>
    <property type="resolution" value="2.60 A"/>
    <property type="chains" value="B=1-104"/>
</dbReference>
<dbReference type="PDB" id="9D1Z">
    <property type="method" value="X-ray"/>
    <property type="resolution" value="1.88 A"/>
    <property type="chains" value="B=1-104"/>
</dbReference>
<dbReference type="PDB" id="9D8P">
    <property type="method" value="EM"/>
    <property type="resolution" value="3.20 A"/>
    <property type="chains" value="B=1-118"/>
</dbReference>
<dbReference type="PDB" id="9EQJ">
    <property type="method" value="X-ray"/>
    <property type="resolution" value="2.05 A"/>
    <property type="chains" value="A/D=1-104"/>
</dbReference>
<dbReference type="PDB" id="9EQM">
    <property type="method" value="X-ray"/>
    <property type="resolution" value="2.19 A"/>
    <property type="chains" value="A=1-104"/>
</dbReference>
<dbReference type="PDB" id="9IPW">
    <property type="method" value="X-ray"/>
    <property type="resolution" value="3.00 A"/>
    <property type="chains" value="A/D/G/J=1-104"/>
</dbReference>
<dbReference type="PDBsum" id="1LM8"/>
<dbReference type="PDBsum" id="1LQB"/>
<dbReference type="PDBsum" id="1VCB"/>
<dbReference type="PDBsum" id="2C9W"/>
<dbReference type="PDBsum" id="2IZV"/>
<dbReference type="PDBsum" id="2JZ3"/>
<dbReference type="PDBsum" id="2MA9"/>
<dbReference type="PDBsum" id="3DCG"/>
<dbReference type="PDBsum" id="3ZKJ"/>
<dbReference type="PDBsum" id="3ZNG"/>
<dbReference type="PDBsum" id="3ZRC"/>
<dbReference type="PDBsum" id="3ZRF"/>
<dbReference type="PDBsum" id="3ZTC"/>
<dbReference type="PDBsum" id="3ZTD"/>
<dbReference type="PDBsum" id="3ZUN"/>
<dbReference type="PDBsum" id="4AJY"/>
<dbReference type="PDBsum" id="4AWJ"/>
<dbReference type="PDBsum" id="4B95"/>
<dbReference type="PDBsum" id="4B9K"/>
<dbReference type="PDBsum" id="4BKS"/>
<dbReference type="PDBsum" id="4BKT"/>
<dbReference type="PDBsum" id="4N9F"/>
<dbReference type="PDBsum" id="4W9C"/>
<dbReference type="PDBsum" id="4W9D"/>
<dbReference type="PDBsum" id="4W9E"/>
<dbReference type="PDBsum" id="4W9F"/>
<dbReference type="PDBsum" id="4W9G"/>
<dbReference type="PDBsum" id="4W9H"/>
<dbReference type="PDBsum" id="4W9I"/>
<dbReference type="PDBsum" id="4W9J"/>
<dbReference type="PDBsum" id="4W9K"/>
<dbReference type="PDBsum" id="4W9L"/>
<dbReference type="PDBsum" id="4WQO"/>
<dbReference type="PDBsum" id="5BO4"/>
<dbReference type="PDBsum" id="5LLI"/>
<dbReference type="PDBsum" id="5N4W"/>
<dbReference type="PDBsum" id="5NVV"/>
<dbReference type="PDBsum" id="5NVW"/>
<dbReference type="PDBsum" id="5NVX"/>
<dbReference type="PDBsum" id="5NVY"/>
<dbReference type="PDBsum" id="5NVZ"/>
<dbReference type="PDBsum" id="5NW0"/>
<dbReference type="PDBsum" id="5NW1"/>
<dbReference type="PDBsum" id="5NW2"/>
<dbReference type="PDBsum" id="5T35"/>
<dbReference type="PDBsum" id="6BVB"/>
<dbReference type="PDBsum" id="6C5X"/>
<dbReference type="PDBsum" id="6FMI"/>
<dbReference type="PDBsum" id="6FMJ"/>
<dbReference type="PDBsum" id="6FMK"/>
<dbReference type="PDBsum" id="6GFX"/>
<dbReference type="PDBsum" id="6GFY"/>
<dbReference type="PDBsum" id="6GFZ"/>
<dbReference type="PDBsum" id="6GMN"/>
<dbReference type="PDBsum" id="6GMQ"/>
<dbReference type="PDBsum" id="6GMR"/>
<dbReference type="PDBsum" id="6GMX"/>
<dbReference type="PDBsum" id="6HAX"/>
<dbReference type="PDBsum" id="6HAY"/>
<dbReference type="PDBsum" id="6HR2"/>
<dbReference type="PDBsum" id="6I4X"/>
<dbReference type="PDBsum" id="6I5J"/>
<dbReference type="PDBsum" id="6I5N"/>
<dbReference type="PDBsum" id="6I7Q"/>
<dbReference type="PDBsum" id="6I7R"/>
<dbReference type="PDBsum" id="6P59"/>
<dbReference type="PDBsum" id="6R6H"/>
<dbReference type="PDBsum" id="6R7F"/>
<dbReference type="PDBsum" id="6R7H"/>
<dbReference type="PDBsum" id="6R7I"/>
<dbReference type="PDBsum" id="6R7N"/>
<dbReference type="PDBsum" id="6SIS"/>
<dbReference type="PDBsum" id="6V9H"/>
<dbReference type="PDBsum" id="6ZHC"/>
<dbReference type="PDBsum" id="7CJB"/>
<dbReference type="PDBsum" id="7JTO"/>
<dbReference type="PDBsum" id="7JTP"/>
<dbReference type="PDBsum" id="7KHH"/>
<dbReference type="PDBsum" id="7M6T"/>
<dbReference type="PDBsum" id="7PI4"/>
<dbReference type="PDBsum" id="7PLO"/>
<dbReference type="PDBsum" id="7Q2J"/>
<dbReference type="PDBsum" id="7S4E"/>
<dbReference type="PDBsum" id="7UPN"/>
<dbReference type="PDBsum" id="7Z6L"/>
<dbReference type="PDBsum" id="7Z76"/>
<dbReference type="PDBsum" id="7Z77"/>
<dbReference type="PDBsum" id="7ZLM"/>
<dbReference type="PDBsum" id="7ZLN"/>
<dbReference type="PDBsum" id="7ZLO"/>
<dbReference type="PDBsum" id="7ZLP"/>
<dbReference type="PDBsum" id="7ZLR"/>
<dbReference type="PDBsum" id="7ZLS"/>
<dbReference type="PDBsum" id="7ZNT"/>
<dbReference type="PDBsum" id="8BB2"/>
<dbReference type="PDBsum" id="8BB3"/>
<dbReference type="PDBsum" id="8BB4"/>
<dbReference type="PDBsum" id="8BB5"/>
<dbReference type="PDBsum" id="8BDI"/>
<dbReference type="PDBsum" id="8BDJ"/>
<dbReference type="PDBsum" id="8BDL"/>
<dbReference type="PDBsum" id="8BDM"/>
<dbReference type="PDBsum" id="8BDN"/>
<dbReference type="PDBsum" id="8BDO"/>
<dbReference type="PDBsum" id="8BDS"/>
<dbReference type="PDBsum" id="8BDT"/>
<dbReference type="PDBsum" id="8BDX"/>
<dbReference type="PDBsum" id="8BEB"/>
<dbReference type="PDBsum" id="8C13"/>
<dbReference type="PDBsum" id="8CQE"/>
<dbReference type="PDBsum" id="8CQK"/>
<dbReference type="PDBsum" id="8CQL"/>
<dbReference type="PDBsum" id="8CX0"/>
<dbReference type="PDBsum" id="8CX1"/>
<dbReference type="PDBsum" id="8CX2"/>
<dbReference type="PDBsum" id="8EBN"/>
<dbReference type="PDBsum" id="8EI3"/>
<dbReference type="PDBsum" id="8EWV"/>
<dbReference type="PDBsum" id="8FVI"/>
<dbReference type="PDBsum" id="8FVJ"/>
<dbReference type="PDBsum" id="8FY0"/>
<dbReference type="PDBsum" id="8FY1"/>
<dbReference type="PDBsum" id="8FY2"/>
<dbReference type="PDBsum" id="8G1P"/>
<dbReference type="PDBsum" id="8G1Q"/>
<dbReference type="PDBsum" id="8IJ1"/>
<dbReference type="PDBsum" id="8JAL"/>
<dbReference type="PDBsum" id="8JAQ"/>
<dbReference type="PDBsum" id="8JAR"/>
<dbReference type="PDBsum" id="8JAS"/>
<dbReference type="PDBsum" id="8JAU"/>
<dbReference type="PDBsum" id="8JAV"/>
<dbReference type="PDBsum" id="8JE1"/>
<dbReference type="PDBsum" id="8JE2"/>
<dbReference type="PDBsum" id="8OEV"/>
<dbReference type="PDBsum" id="8OEW"/>
<dbReference type="PDBsum" id="8OF0"/>
<dbReference type="PDBsum" id="8OKX"/>
<dbReference type="PDBsum" id="8OL1"/>
<dbReference type="PDBsum" id="8P0F"/>
<dbReference type="PDBsum" id="8PC2"/>
<dbReference type="PDBsum" id="8PQL"/>
<dbReference type="PDBsum" id="8Q7R"/>
<dbReference type="PDBsum" id="8QJR"/>
<dbReference type="PDBsum" id="8QJS"/>
<dbReference type="PDBsum" id="8QU8"/>
<dbReference type="PDBsum" id="8QVU"/>
<dbReference type="PDBsum" id="8QW6"/>
<dbReference type="PDBsum" id="8QW7"/>
<dbReference type="PDBsum" id="8R5H"/>
<dbReference type="PDBsum" id="8RWZ"/>
<dbReference type="PDBsum" id="8RX0"/>
<dbReference type="PDBsum" id="8SH2"/>
<dbReference type="PDBsum" id="8SZK"/>
<dbReference type="PDBsum" id="8VL9"/>
<dbReference type="PDBsum" id="8VLB"/>
<dbReference type="PDBsum" id="8WDK"/>
<dbReference type="PDBsum" id="8WQA"/>
<dbReference type="PDBsum" id="8WQB"/>
<dbReference type="PDBsum" id="8WQC"/>
<dbReference type="PDBsum" id="8WQE"/>
<dbReference type="PDBsum" id="8WQF"/>
<dbReference type="PDBsum" id="8WQG"/>
<dbReference type="PDBsum" id="8WQH"/>
<dbReference type="PDBsum" id="8Y1U"/>
<dbReference type="PDBsum" id="8YMB"/>
<dbReference type="PDBsum" id="8ZV8"/>
<dbReference type="PDBsum" id="8ZVJ"/>
<dbReference type="PDBsum" id="9BJU"/>
<dbReference type="PDBsum" id="9BOL"/>
<dbReference type="PDBsum" id="9D1I"/>
<dbReference type="PDBsum" id="9D1Y"/>
<dbReference type="PDBsum" id="9D1Z"/>
<dbReference type="PDBsum" id="9D8P"/>
<dbReference type="PDBsum" id="9EQJ"/>
<dbReference type="PDBsum" id="9EQM"/>
<dbReference type="PDBsum" id="9IPW"/>
<dbReference type="BMRB" id="Q15370"/>
<dbReference type="EMDB" id="EMD-13494"/>
<dbReference type="EMDB" id="EMD-16832"/>
<dbReference type="EMDB" id="EMD-16833"/>
<dbReference type="EMDB" id="EMD-16837"/>
<dbReference type="EMDB" id="EMD-16838"/>
<dbReference type="EMDB" id="EMD-16840"/>
<dbReference type="EMDB" id="EMD-16933"/>
<dbReference type="EMDB" id="EMD-16936"/>
<dbReference type="EMDB" id="EMD-17822"/>
<dbReference type="EMDB" id="EMD-18230"/>
<dbReference type="EMDB" id="EMD-18657"/>
<dbReference type="EMDB" id="EMD-18915"/>
<dbReference type="EMDB" id="EMD-19856"/>
<dbReference type="EMDB" id="EMD-21120"/>
<dbReference type="EMDB" id="EMD-26673"/>
<dbReference type="EMDB" id="EMD-27032"/>
<dbReference type="EMDB" id="EMD-27033"/>
<dbReference type="EMDB" id="EMD-27034"/>
<dbReference type="EMDB" id="EMD-27885"/>
<dbReference type="EMDB" id="EMD-29488"/>
<dbReference type="EMDB" id="EMD-29489"/>
<dbReference type="EMDB" id="EMD-29490"/>
<dbReference type="EMDB" id="EMD-35461"/>
<dbReference type="EMDB" id="EMD-36129"/>
<dbReference type="EMDB" id="EMD-36131"/>
<dbReference type="EMDB" id="EMD-36132"/>
<dbReference type="EMDB" id="EMD-36133"/>
<dbReference type="EMDB" id="EMD-36134"/>
<dbReference type="EMDB" id="EMD-36135"/>
<dbReference type="EMDB" id="EMD-36182"/>
<dbReference type="EMDB" id="EMD-36183"/>
<dbReference type="EMDB" id="EMD-37464"/>
<dbReference type="EMDB" id="EMD-37736"/>
<dbReference type="EMDB" id="EMD-37737"/>
<dbReference type="EMDB" id="EMD-37739"/>
<dbReference type="EMDB" id="EMD-37742"/>
<dbReference type="EMDB" id="EMD-37743"/>
<dbReference type="EMDB" id="EMD-37744"/>
<dbReference type="EMDB" id="EMD-37745"/>
<dbReference type="EMDB" id="EMD-40477"/>
<dbReference type="EMDB" id="EMD-40919"/>
<dbReference type="EMDB" id="EMD-46644"/>
<dbReference type="EMDB" id="EMD-46645"/>
<dbReference type="EMDB" id="EMD-4736"/>
<dbReference type="EMDB" id="EMD-4739"/>
<dbReference type="EMDB" id="EMD-4741"/>
<dbReference type="EMDB" id="EMD-4742"/>
<dbReference type="EMDB" id="EMD-4744"/>
<dbReference type="SASBDB" id="Q15370"/>
<dbReference type="SMR" id="Q15370"/>
<dbReference type="BioGRID" id="112785">
    <property type="interactions" value="352"/>
</dbReference>
<dbReference type="ComplexPortal" id="CPX-2214">
    <property type="entry name" value="LRR1-Elongin C-Elongin B E3 ubiquitin ligase complex"/>
</dbReference>
<dbReference type="ComplexPortal" id="CPX-2217">
    <property type="entry name" value="FEM1A-Elongin C-Elongin B E3 ubiquitin ligase complex"/>
</dbReference>
<dbReference type="ComplexPortal" id="CPX-2218">
    <property type="entry name" value="FEB1B-Elongin C-Elongin B E3 ubiquitin ligase complex"/>
</dbReference>
<dbReference type="ComplexPortal" id="CPX-2219">
    <property type="entry name" value="FEB1C-Elongin C-Elongin B E3 ubiquitin ligase complex"/>
</dbReference>
<dbReference type="ComplexPortal" id="CPX-2220">
    <property type="entry name" value="ZYG11B-Elongin C-Elongin B E3 ubiquitin ligase complex"/>
</dbReference>
<dbReference type="ComplexPortal" id="CPX-2221">
    <property type="entry name" value="APPBP2-Elongin C-Elongin B E3 ubiquitin ligase complex"/>
</dbReference>
<dbReference type="ComplexPortal" id="CPX-2222">
    <property type="entry name" value="ZER1-Elongin C-Elongin B E3 ubiquitin ligase complex"/>
</dbReference>
<dbReference type="ComplexPortal" id="CPX-2223">
    <property type="entry name" value="KLHDC10-Elongin C-Elongin B E3 ubiquitin ligase complex"/>
</dbReference>
<dbReference type="ComplexPortal" id="CPX-2226">
    <property type="entry name" value="KLHDC2-Elongin C-Elongin B E3 ubiquitin ligase complex"/>
</dbReference>
<dbReference type="ComplexPortal" id="CPX-2228">
    <property type="entry name" value="KLHDC3-Elongin C-Elongin B E3 ubiquitin ligase complex"/>
</dbReference>
<dbReference type="ComplexPortal" id="CPX-2229">
    <property type="entry name" value="PRAME-Elongin C-Elongin B E3 ubiquitin ligase complex"/>
</dbReference>
<dbReference type="ComplexPortal" id="CPX-2250">
    <property type="entry name" value="VHL-Elongin C-Elongin B E3 ubiquitin ligase complex"/>
</dbReference>
<dbReference type="CORUM" id="Q15370"/>
<dbReference type="DIP" id="DIP-29570N"/>
<dbReference type="FunCoup" id="Q15370">
    <property type="interactions" value="1938"/>
</dbReference>
<dbReference type="IntAct" id="Q15370">
    <property type="interactions" value="115"/>
</dbReference>
<dbReference type="MINT" id="Q15370"/>
<dbReference type="STRING" id="9606.ENSP00000262306"/>
<dbReference type="BindingDB" id="Q15370"/>
<dbReference type="ChEMBL" id="CHEMBL3301400"/>
<dbReference type="ChEMBL" id="CHEMBL4296117"/>
<dbReference type="GlyGen" id="Q15370">
    <property type="glycosylation" value="1 site, 1 O-linked glycan (1 site)"/>
</dbReference>
<dbReference type="iPTMnet" id="Q15370"/>
<dbReference type="MetOSite" id="Q15370"/>
<dbReference type="PhosphoSitePlus" id="Q15370"/>
<dbReference type="SwissPalm" id="Q15370"/>
<dbReference type="BioMuta" id="ELOB"/>
<dbReference type="DMDM" id="32699512"/>
<dbReference type="jPOST" id="Q15370"/>
<dbReference type="MassIVE" id="Q15370"/>
<dbReference type="PaxDb" id="9606-ENSP00000262306"/>
<dbReference type="PeptideAtlas" id="Q15370"/>
<dbReference type="ProteomicsDB" id="60548">
    <molecule id="Q15370-1"/>
</dbReference>
<dbReference type="ProteomicsDB" id="6294"/>
<dbReference type="Pumba" id="Q15370"/>
<dbReference type="TopDownProteomics" id="Q15370-1">
    <molecule id="Q15370-1"/>
</dbReference>
<dbReference type="TopDownProteomics" id="Q15370-2">
    <molecule id="Q15370-2"/>
</dbReference>
<dbReference type="Antibodypedia" id="23893">
    <property type="antibodies" value="338 antibodies from 33 providers"/>
</dbReference>
<dbReference type="DNASU" id="6923"/>
<dbReference type="Ensembl" id="ENST00000262306.11">
    <molecule id="Q15370-2"/>
    <property type="protein sequence ID" value="ENSP00000262306.7"/>
    <property type="gene ID" value="ENSG00000103363.16"/>
</dbReference>
<dbReference type="Ensembl" id="ENST00000409906.9">
    <molecule id="Q15370-1"/>
    <property type="protein sequence ID" value="ENSP00000386652.5"/>
    <property type="gene ID" value="ENSG00000103363.16"/>
</dbReference>
<dbReference type="GeneID" id="6923"/>
<dbReference type="KEGG" id="hsa:6923"/>
<dbReference type="MANE-Select" id="ENST00000409906.9">
    <property type="protein sequence ID" value="ENSP00000386652.5"/>
    <property type="RefSeq nucleotide sequence ID" value="NM_007108.4"/>
    <property type="RefSeq protein sequence ID" value="NP_009039.1"/>
</dbReference>
<dbReference type="UCSC" id="uc002crm.4">
    <molecule id="Q15370-1"/>
    <property type="organism name" value="human"/>
</dbReference>
<dbReference type="AGR" id="HGNC:11619"/>
<dbReference type="CTD" id="6923"/>
<dbReference type="DisGeNET" id="6923"/>
<dbReference type="GeneCards" id="ELOB"/>
<dbReference type="HGNC" id="HGNC:11619">
    <property type="gene designation" value="ELOB"/>
</dbReference>
<dbReference type="HPA" id="ENSG00000103363">
    <property type="expression patterns" value="Low tissue specificity"/>
</dbReference>
<dbReference type="MIM" id="600787">
    <property type="type" value="gene"/>
</dbReference>
<dbReference type="neXtProt" id="NX_Q15370"/>
<dbReference type="OpenTargets" id="ENSG00000103363"/>
<dbReference type="PharmGKB" id="PA36378"/>
<dbReference type="VEuPathDB" id="HostDB:ENSG00000103363"/>
<dbReference type="eggNOG" id="KOG4495">
    <property type="taxonomic scope" value="Eukaryota"/>
</dbReference>
<dbReference type="GeneTree" id="ENSGT00390000018316"/>
<dbReference type="HOGENOM" id="CLU_139243_1_0_1"/>
<dbReference type="InParanoid" id="Q15370"/>
<dbReference type="OMA" id="GQEQMDQ"/>
<dbReference type="OrthoDB" id="9514798at2759"/>
<dbReference type="PAN-GO" id="Q15370">
    <property type="GO annotations" value="2 GO annotations based on evolutionary models"/>
</dbReference>
<dbReference type="PhylomeDB" id="Q15370"/>
<dbReference type="TreeFam" id="TF325964"/>
<dbReference type="PathwayCommons" id="Q15370"/>
<dbReference type="Reactome" id="R-HSA-112382">
    <property type="pathway name" value="Formation of RNA Pol II elongation complex"/>
</dbReference>
<dbReference type="Reactome" id="R-HSA-1234176">
    <property type="pathway name" value="Oxygen-dependent proline hydroxylation of Hypoxia-inducible Factor Alpha"/>
</dbReference>
<dbReference type="Reactome" id="R-HSA-167152">
    <property type="pathway name" value="Formation of HIV elongation complex in the absence of HIV Tat"/>
</dbReference>
<dbReference type="Reactome" id="R-HSA-167200">
    <property type="pathway name" value="Formation of HIV-1 elongation complex containing HIV-1 Tat"/>
</dbReference>
<dbReference type="Reactome" id="R-HSA-167238">
    <property type="pathway name" value="Pausing and recovery of Tat-mediated HIV elongation"/>
</dbReference>
<dbReference type="Reactome" id="R-HSA-167243">
    <property type="pathway name" value="Tat-mediated HIV elongation arrest and recovery"/>
</dbReference>
<dbReference type="Reactome" id="R-HSA-167246">
    <property type="pathway name" value="Tat-mediated elongation of the HIV-1 transcript"/>
</dbReference>
<dbReference type="Reactome" id="R-HSA-167287">
    <property type="pathway name" value="HIV elongation arrest and recovery"/>
</dbReference>
<dbReference type="Reactome" id="R-HSA-167290">
    <property type="pathway name" value="Pausing and recovery of HIV elongation"/>
</dbReference>
<dbReference type="Reactome" id="R-HSA-180585">
    <property type="pathway name" value="Vif-mediated degradation of APOBEC3G"/>
</dbReference>
<dbReference type="Reactome" id="R-HSA-674695">
    <property type="pathway name" value="RNA Polymerase II Pre-transcription Events"/>
</dbReference>
<dbReference type="Reactome" id="R-HSA-6796648">
    <property type="pathway name" value="TP53 Regulates Transcription of DNA Repair Genes"/>
</dbReference>
<dbReference type="Reactome" id="R-HSA-75955">
    <property type="pathway name" value="RNA Polymerase II Transcription Elongation"/>
</dbReference>
<dbReference type="Reactome" id="R-HSA-8951664">
    <property type="pathway name" value="Neddylation"/>
</dbReference>
<dbReference type="Reactome" id="R-HSA-9010553">
    <property type="pathway name" value="Regulation of expression of SLITs and ROBOs"/>
</dbReference>
<dbReference type="Reactome" id="R-HSA-9705462">
    <property type="pathway name" value="Inactivation of CSF3 (G-CSF) signaling"/>
</dbReference>
<dbReference type="Reactome" id="R-HSA-983168">
    <property type="pathway name" value="Antigen processing: Ubiquitination &amp; Proteasome degradation"/>
</dbReference>
<dbReference type="Reactome" id="R-HSA-9833109">
    <property type="pathway name" value="Evasion by RSV of host interferon responses"/>
</dbReference>
<dbReference type="SignaLink" id="Q15370"/>
<dbReference type="SIGNOR" id="Q15370"/>
<dbReference type="UniPathway" id="UPA00143"/>
<dbReference type="BioGRID-ORCS" id="6923">
    <property type="hits" value="795 hits in 1215 CRISPR screens"/>
</dbReference>
<dbReference type="ChiTaRS" id="TCEB2">
    <property type="organism name" value="human"/>
</dbReference>
<dbReference type="EvolutionaryTrace" id="Q15370"/>
<dbReference type="GeneWiki" id="TCEB2"/>
<dbReference type="GenomeRNAi" id="6923"/>
<dbReference type="Pharos" id="Q15370">
    <property type="development level" value="Tbio"/>
</dbReference>
<dbReference type="PRO" id="PR:Q15370"/>
<dbReference type="Proteomes" id="UP000005640">
    <property type="component" value="Chromosome 16"/>
</dbReference>
<dbReference type="RNAct" id="Q15370">
    <property type="molecule type" value="protein"/>
</dbReference>
<dbReference type="Bgee" id="ENSG00000103363">
    <property type="expression patterns" value="Expressed in left testis and 211 other cell types or tissues"/>
</dbReference>
<dbReference type="ExpressionAtlas" id="Q15370">
    <property type="expression patterns" value="baseline and differential"/>
</dbReference>
<dbReference type="GO" id="GO:0031462">
    <property type="term" value="C:Cul2-RING ubiquitin ligase complex"/>
    <property type="evidence" value="ECO:0000314"/>
    <property type="project" value="UniProtKB"/>
</dbReference>
<dbReference type="GO" id="GO:0031466">
    <property type="term" value="C:Cul5-RING ubiquitin ligase complex"/>
    <property type="evidence" value="ECO:0000314"/>
    <property type="project" value="UniProtKB"/>
</dbReference>
<dbReference type="GO" id="GO:0005829">
    <property type="term" value="C:cytosol"/>
    <property type="evidence" value="ECO:0000304"/>
    <property type="project" value="Reactome"/>
</dbReference>
<dbReference type="GO" id="GO:0070449">
    <property type="term" value="C:elongin complex"/>
    <property type="evidence" value="ECO:0000314"/>
    <property type="project" value="UniProtKB"/>
</dbReference>
<dbReference type="GO" id="GO:0005654">
    <property type="term" value="C:nucleoplasm"/>
    <property type="evidence" value="ECO:0000304"/>
    <property type="project" value="Reactome"/>
</dbReference>
<dbReference type="GO" id="GO:0030891">
    <property type="term" value="C:VCB complex"/>
    <property type="evidence" value="ECO:0000318"/>
    <property type="project" value="GO_Central"/>
</dbReference>
<dbReference type="GO" id="GO:0001222">
    <property type="term" value="F:transcription corepressor binding"/>
    <property type="evidence" value="ECO:0000353"/>
    <property type="project" value="UniProtKB"/>
</dbReference>
<dbReference type="GO" id="GO:0031625">
    <property type="term" value="F:ubiquitin protein ligase binding"/>
    <property type="evidence" value="ECO:0000314"/>
    <property type="project" value="UniProtKB"/>
</dbReference>
<dbReference type="GO" id="GO:0032436">
    <property type="term" value="P:positive regulation of proteasomal ubiquitin-dependent protein catabolic process"/>
    <property type="evidence" value="ECO:0000250"/>
    <property type="project" value="FlyBase"/>
</dbReference>
<dbReference type="GO" id="GO:0016567">
    <property type="term" value="P:protein ubiquitination"/>
    <property type="evidence" value="ECO:0007669"/>
    <property type="project" value="UniProtKB-UniPathway"/>
</dbReference>
<dbReference type="GO" id="GO:0065003">
    <property type="term" value="P:protein-containing complex assembly"/>
    <property type="evidence" value="ECO:0000304"/>
    <property type="project" value="ProtInc"/>
</dbReference>
<dbReference type="GO" id="GO:0140958">
    <property type="term" value="P:target-directed miRNA degradation"/>
    <property type="evidence" value="ECO:0000315"/>
    <property type="project" value="FlyBase"/>
</dbReference>
<dbReference type="GO" id="GO:0006368">
    <property type="term" value="P:transcription elongation by RNA polymerase II"/>
    <property type="evidence" value="ECO:0000304"/>
    <property type="project" value="ProtInc"/>
</dbReference>
<dbReference type="GO" id="GO:0006367">
    <property type="term" value="P:transcription initiation at RNA polymerase II promoter"/>
    <property type="evidence" value="ECO:0000314"/>
    <property type="project" value="UniProtKB"/>
</dbReference>
<dbReference type="CDD" id="cd01788">
    <property type="entry name" value="Ubl_ElonginB"/>
    <property type="match status" value="1"/>
</dbReference>
<dbReference type="FunFam" id="3.10.20.90:FF:000108">
    <property type="entry name" value="Elongin-B"/>
    <property type="match status" value="1"/>
</dbReference>
<dbReference type="Gene3D" id="3.10.20.90">
    <property type="entry name" value="Phosphatidylinositol 3-kinase Catalytic Subunit, Chain A, domain 1"/>
    <property type="match status" value="1"/>
</dbReference>
<dbReference type="InterPro" id="IPR039049">
    <property type="entry name" value="ELOB"/>
</dbReference>
<dbReference type="InterPro" id="IPR000626">
    <property type="entry name" value="Ubiquitin-like_dom"/>
</dbReference>
<dbReference type="InterPro" id="IPR029071">
    <property type="entry name" value="Ubiquitin-like_domsf"/>
</dbReference>
<dbReference type="PANTHER" id="PTHR13248:SF4">
    <property type="entry name" value="ELONGIN B"/>
    <property type="match status" value="1"/>
</dbReference>
<dbReference type="PANTHER" id="PTHR13248">
    <property type="entry name" value="TRANSCRIPTION ELONGATION FACTOR B POLYPEPTIDE 2"/>
    <property type="match status" value="1"/>
</dbReference>
<dbReference type="Pfam" id="PF00240">
    <property type="entry name" value="ubiquitin"/>
    <property type="match status" value="1"/>
</dbReference>
<dbReference type="SMART" id="SM00213">
    <property type="entry name" value="UBQ"/>
    <property type="match status" value="1"/>
</dbReference>
<dbReference type="SUPFAM" id="SSF54236">
    <property type="entry name" value="Ubiquitin-like"/>
    <property type="match status" value="1"/>
</dbReference>
<dbReference type="PROSITE" id="PS50053">
    <property type="entry name" value="UBIQUITIN_2"/>
    <property type="match status" value="1"/>
</dbReference>
<evidence type="ECO:0000250" key="1">
    <source>
        <dbReference type="UniProtKB" id="P62869"/>
    </source>
</evidence>
<evidence type="ECO:0000255" key="2">
    <source>
        <dbReference type="PROSITE-ProRule" id="PRU00214"/>
    </source>
</evidence>
<evidence type="ECO:0000256" key="3">
    <source>
        <dbReference type="SAM" id="MobiDB-lite"/>
    </source>
</evidence>
<evidence type="ECO:0000269" key="4">
    <source>
    </source>
</evidence>
<evidence type="ECO:0000269" key="5">
    <source>
    </source>
</evidence>
<evidence type="ECO:0000269" key="6">
    <source>
    </source>
</evidence>
<evidence type="ECO:0000269" key="7">
    <source>
    </source>
</evidence>
<evidence type="ECO:0000269" key="8">
    <source>
    </source>
</evidence>
<evidence type="ECO:0000269" key="9">
    <source>
    </source>
</evidence>
<evidence type="ECO:0000269" key="10">
    <source>
    </source>
</evidence>
<evidence type="ECO:0000269" key="11">
    <source>
    </source>
</evidence>
<evidence type="ECO:0000269" key="12">
    <source>
    </source>
</evidence>
<evidence type="ECO:0000269" key="13">
    <source>
    </source>
</evidence>
<evidence type="ECO:0000269" key="14">
    <source>
    </source>
</evidence>
<evidence type="ECO:0000269" key="15">
    <source>
    </source>
</evidence>
<evidence type="ECO:0000269" key="16">
    <source>
    </source>
</evidence>
<evidence type="ECO:0000269" key="17">
    <source>
    </source>
</evidence>
<evidence type="ECO:0000269" key="18">
    <source>
    </source>
</evidence>
<evidence type="ECO:0000269" key="19">
    <source>
    </source>
</evidence>
<evidence type="ECO:0000269" key="20">
    <source>
    </source>
</evidence>
<evidence type="ECO:0000269" key="21">
    <source>
    </source>
</evidence>
<evidence type="ECO:0000269" key="22">
    <source>
    </source>
</evidence>
<evidence type="ECO:0000269" key="23">
    <source>
    </source>
</evidence>
<evidence type="ECO:0000269" key="24">
    <source>
    </source>
</evidence>
<evidence type="ECO:0000269" key="25">
    <source>
    </source>
</evidence>
<evidence type="ECO:0000269" key="26">
    <source>
    </source>
</evidence>
<evidence type="ECO:0000269" key="27">
    <source>
    </source>
</evidence>
<evidence type="ECO:0000269" key="28">
    <source>
    </source>
</evidence>
<evidence type="ECO:0000269" key="29">
    <source>
    </source>
</evidence>
<evidence type="ECO:0000269" key="30">
    <source>
    </source>
</evidence>
<evidence type="ECO:0000269" key="31">
    <source>
    </source>
</evidence>
<evidence type="ECO:0000269" key="32">
    <source>
    </source>
</evidence>
<evidence type="ECO:0000269" key="33">
    <source>
    </source>
</evidence>
<evidence type="ECO:0000269" key="34">
    <source>
    </source>
</evidence>
<evidence type="ECO:0000269" key="35">
    <source>
    </source>
</evidence>
<evidence type="ECO:0000269" key="36">
    <source>
    </source>
</evidence>
<evidence type="ECO:0000269" key="37">
    <source>
    </source>
</evidence>
<evidence type="ECO:0000269" key="38">
    <source>
    </source>
</evidence>
<evidence type="ECO:0000269" key="39">
    <source>
    </source>
</evidence>
<evidence type="ECO:0000269" key="40">
    <source>
    </source>
</evidence>
<evidence type="ECO:0000269" key="41">
    <source>
    </source>
</evidence>
<evidence type="ECO:0000269" key="42">
    <source>
    </source>
</evidence>
<evidence type="ECO:0000269" key="43">
    <source>
    </source>
</evidence>
<evidence type="ECO:0000269" key="44">
    <source>
    </source>
</evidence>
<evidence type="ECO:0000269" key="45">
    <source>
    </source>
</evidence>
<evidence type="ECO:0000269" key="46">
    <source>
    </source>
</evidence>
<evidence type="ECO:0000269" key="47">
    <source ref="6"/>
</evidence>
<evidence type="ECO:0000303" key="48">
    <source>
    </source>
</evidence>
<evidence type="ECO:0000303" key="49">
    <source>
    </source>
</evidence>
<evidence type="ECO:0000303" key="50">
    <source ref="2"/>
</evidence>
<evidence type="ECO:0000305" key="51"/>
<evidence type="ECO:0000305" key="52">
    <source>
    </source>
</evidence>
<evidence type="ECO:0000312" key="53">
    <source>
        <dbReference type="HGNC" id="HGNC:11619"/>
    </source>
</evidence>
<evidence type="ECO:0007744" key="54">
    <source>
        <dbReference type="PDB" id="2MA9"/>
    </source>
</evidence>
<evidence type="ECO:0007744" key="55">
    <source>
        <dbReference type="PDB" id="3DCG"/>
    </source>
</evidence>
<evidence type="ECO:0007744" key="56">
    <source>
        <dbReference type="PDB" id="3ZNG"/>
    </source>
</evidence>
<evidence type="ECO:0007744" key="57">
    <source>
        <dbReference type="PDB" id="4N9F"/>
    </source>
</evidence>
<evidence type="ECO:0007744" key="58">
    <source>
        <dbReference type="PDB" id="6I4X"/>
    </source>
</evidence>
<evidence type="ECO:0007744" key="59">
    <source>
        <dbReference type="PDB" id="6I5J"/>
    </source>
</evidence>
<evidence type="ECO:0007744" key="60">
    <source>
        <dbReference type="PDB" id="6I5N"/>
    </source>
</evidence>
<evidence type="ECO:0007744" key="61">
    <source>
        <dbReference type="PDB" id="6V9H"/>
    </source>
</evidence>
<evidence type="ECO:0007744" key="62">
    <source>
        <dbReference type="PDB" id="7M6T"/>
    </source>
</evidence>
<evidence type="ECO:0007744" key="63">
    <source>
        <dbReference type="PDB" id="7PLO"/>
    </source>
</evidence>
<evidence type="ECO:0007744" key="64">
    <source>
        <dbReference type="PDB" id="7ZLM"/>
    </source>
</evidence>
<evidence type="ECO:0007744" key="65">
    <source>
        <dbReference type="PDB" id="7ZLN"/>
    </source>
</evidence>
<evidence type="ECO:0007744" key="66">
    <source>
        <dbReference type="PDB" id="7ZLO"/>
    </source>
</evidence>
<evidence type="ECO:0007744" key="67">
    <source>
        <dbReference type="PDB" id="7ZLP"/>
    </source>
</evidence>
<evidence type="ECO:0007744" key="68">
    <source>
        <dbReference type="PDB" id="7ZLR"/>
    </source>
</evidence>
<evidence type="ECO:0007744" key="69">
    <source>
        <dbReference type="PDB" id="7ZLS"/>
    </source>
</evidence>
<evidence type="ECO:0007744" key="70">
    <source>
        <dbReference type="PDB" id="8CX0"/>
    </source>
</evidence>
<evidence type="ECO:0007744" key="71">
    <source>
        <dbReference type="PDB" id="8CX1"/>
    </source>
</evidence>
<evidence type="ECO:0007744" key="72">
    <source>
        <dbReference type="PDB" id="8CX2"/>
    </source>
</evidence>
<evidence type="ECO:0007744" key="73">
    <source>
        <dbReference type="PDB" id="8EBN"/>
    </source>
</evidence>
<evidence type="ECO:0007744" key="74">
    <source>
        <dbReference type="PDB" id="8FVI"/>
    </source>
</evidence>
<evidence type="ECO:0007744" key="75">
    <source>
        <dbReference type="PDB" id="8FVJ"/>
    </source>
</evidence>
<evidence type="ECO:0007744" key="76">
    <source>
        <dbReference type="PDB" id="8OKX"/>
    </source>
</evidence>
<evidence type="ECO:0007744" key="77">
    <source>
        <dbReference type="PDB" id="8OL1"/>
    </source>
</evidence>
<evidence type="ECO:0007744" key="78">
    <source>
        <dbReference type="PDB" id="8PQL"/>
    </source>
</evidence>
<evidence type="ECO:0007744" key="79">
    <source>
        <dbReference type="PDB" id="8SH2"/>
    </source>
</evidence>
<evidence type="ECO:0007744" key="80">
    <source>
        <dbReference type="PDB" id="9D1I"/>
    </source>
</evidence>
<evidence type="ECO:0007744" key="81">
    <source>
        <dbReference type="PDB" id="9D1Y"/>
    </source>
</evidence>
<evidence type="ECO:0007744" key="82">
    <source>
        <dbReference type="PDB" id="9D1Z"/>
    </source>
</evidence>
<evidence type="ECO:0007744" key="83">
    <source>
        <dbReference type="PDB" id="9D8P"/>
    </source>
</evidence>
<evidence type="ECO:0007744" key="84">
    <source>
    </source>
</evidence>
<evidence type="ECO:0007744" key="85">
    <source>
    </source>
</evidence>
<evidence type="ECO:0007829" key="86">
    <source>
        <dbReference type="PDB" id="1LM8"/>
    </source>
</evidence>
<evidence type="ECO:0007829" key="87">
    <source>
        <dbReference type="PDB" id="2JZ3"/>
    </source>
</evidence>
<evidence type="ECO:0007829" key="88">
    <source>
        <dbReference type="PDB" id="2MA9"/>
    </source>
</evidence>
<evidence type="ECO:0007829" key="89">
    <source>
        <dbReference type="PDB" id="3ZRF"/>
    </source>
</evidence>
<evidence type="ECO:0007829" key="90">
    <source>
        <dbReference type="PDB" id="7Z76"/>
    </source>
</evidence>
<evidence type="ECO:0007829" key="91">
    <source>
        <dbReference type="PDB" id="8JAR"/>
    </source>
</evidence>
<evidence type="ECO:0007829" key="92">
    <source>
        <dbReference type="PDB" id="8QVU"/>
    </source>
</evidence>
<reference key="1">
    <citation type="journal article" date="1995" name="Proc. Natl. Acad. Sci. U.S.A.">
        <title>Positive regulation of general transcription factor SIII by a tailed ubiquitin homolog.</title>
        <authorList>
            <person name="Garrett K.P."/>
            <person name="Aso T."/>
            <person name="Bradsher J.N."/>
            <person name="Foundling S.I."/>
            <person name="Lane W.S."/>
            <person name="Conaway R.C."/>
            <person name="Conaway J.W."/>
        </authorList>
    </citation>
    <scope>NUCLEOTIDE SEQUENCE [MRNA] (ISOFORM 1)</scope>
    <scope>FUNCTION</scope>
</reference>
<reference key="2">
    <citation type="submission" date="2002-03" db="EMBL/GenBank/DDBJ databases">
        <authorList>
            <person name="Bonaldo M.F."/>
            <person name="Lennon G."/>
            <person name="Soares M.B."/>
        </authorList>
    </citation>
    <scope>NUCLEOTIDE SEQUENCE [LARGE SCALE MRNA] (ISOFORM 2)</scope>
</reference>
<reference key="3">
    <citation type="journal article" date="2004" name="Nature">
        <title>The sequence and analysis of duplication-rich human chromosome 16.</title>
        <authorList>
            <person name="Martin J."/>
            <person name="Han C."/>
            <person name="Gordon L.A."/>
            <person name="Terry A."/>
            <person name="Prabhakar S."/>
            <person name="She X."/>
            <person name="Xie G."/>
            <person name="Hellsten U."/>
            <person name="Chan Y.M."/>
            <person name="Altherr M."/>
            <person name="Couronne O."/>
            <person name="Aerts A."/>
            <person name="Bajorek E."/>
            <person name="Black S."/>
            <person name="Blumer H."/>
            <person name="Branscomb E."/>
            <person name="Brown N.C."/>
            <person name="Bruno W.J."/>
            <person name="Buckingham J.M."/>
            <person name="Callen D.F."/>
            <person name="Campbell C.S."/>
            <person name="Campbell M.L."/>
            <person name="Campbell E.W."/>
            <person name="Caoile C."/>
            <person name="Challacombe J.F."/>
            <person name="Chasteen L.A."/>
            <person name="Chertkov O."/>
            <person name="Chi H.C."/>
            <person name="Christensen M."/>
            <person name="Clark L.M."/>
            <person name="Cohn J.D."/>
            <person name="Denys M."/>
            <person name="Detter J.C."/>
            <person name="Dickson M."/>
            <person name="Dimitrijevic-Bussod M."/>
            <person name="Escobar J."/>
            <person name="Fawcett J.J."/>
            <person name="Flowers D."/>
            <person name="Fotopulos D."/>
            <person name="Glavina T."/>
            <person name="Gomez M."/>
            <person name="Gonzales E."/>
            <person name="Goodstein D."/>
            <person name="Goodwin L.A."/>
            <person name="Grady D.L."/>
            <person name="Grigoriev I."/>
            <person name="Groza M."/>
            <person name="Hammon N."/>
            <person name="Hawkins T."/>
            <person name="Haydu L."/>
            <person name="Hildebrand C.E."/>
            <person name="Huang W."/>
            <person name="Israni S."/>
            <person name="Jett J."/>
            <person name="Jewett P.B."/>
            <person name="Kadner K."/>
            <person name="Kimball H."/>
            <person name="Kobayashi A."/>
            <person name="Krawczyk M.-C."/>
            <person name="Leyba T."/>
            <person name="Longmire J.L."/>
            <person name="Lopez F."/>
            <person name="Lou Y."/>
            <person name="Lowry S."/>
            <person name="Ludeman T."/>
            <person name="Manohar C.F."/>
            <person name="Mark G.A."/>
            <person name="McMurray K.L."/>
            <person name="Meincke L.J."/>
            <person name="Morgan J."/>
            <person name="Moyzis R.K."/>
            <person name="Mundt M.O."/>
            <person name="Munk A.C."/>
            <person name="Nandkeshwar R.D."/>
            <person name="Pitluck S."/>
            <person name="Pollard M."/>
            <person name="Predki P."/>
            <person name="Parson-Quintana B."/>
            <person name="Ramirez L."/>
            <person name="Rash S."/>
            <person name="Retterer J."/>
            <person name="Ricke D.O."/>
            <person name="Robinson D.L."/>
            <person name="Rodriguez A."/>
            <person name="Salamov A."/>
            <person name="Saunders E.H."/>
            <person name="Scott D."/>
            <person name="Shough T."/>
            <person name="Stallings R.L."/>
            <person name="Stalvey M."/>
            <person name="Sutherland R.D."/>
            <person name="Tapia R."/>
            <person name="Tesmer J.G."/>
            <person name="Thayer N."/>
            <person name="Thompson L.S."/>
            <person name="Tice H."/>
            <person name="Torney D.C."/>
            <person name="Tran-Gyamfi M."/>
            <person name="Tsai M."/>
            <person name="Ulanovsky L.E."/>
            <person name="Ustaszewska A."/>
            <person name="Vo N."/>
            <person name="White P.S."/>
            <person name="Williams A.L."/>
            <person name="Wills P.L."/>
            <person name="Wu J.-R."/>
            <person name="Wu K."/>
            <person name="Yang J."/>
            <person name="DeJong P."/>
            <person name="Bruce D."/>
            <person name="Doggett N.A."/>
            <person name="Deaven L."/>
            <person name="Schmutz J."/>
            <person name="Grimwood J."/>
            <person name="Richardson P."/>
            <person name="Rokhsar D.S."/>
            <person name="Eichler E.E."/>
            <person name="Gilna P."/>
            <person name="Lucas S.M."/>
            <person name="Myers R.M."/>
            <person name="Rubin E.M."/>
            <person name="Pennacchio L.A."/>
        </authorList>
    </citation>
    <scope>NUCLEOTIDE SEQUENCE [LARGE SCALE GENOMIC DNA]</scope>
</reference>
<reference key="4">
    <citation type="submission" date="2005-09" db="EMBL/GenBank/DDBJ databases">
        <authorList>
            <person name="Mural R.J."/>
            <person name="Istrail S."/>
            <person name="Sutton G."/>
            <person name="Florea L."/>
            <person name="Halpern A.L."/>
            <person name="Mobarry C.M."/>
            <person name="Lippert R."/>
            <person name="Walenz B."/>
            <person name="Shatkay H."/>
            <person name="Dew I."/>
            <person name="Miller J.R."/>
            <person name="Flanigan M.J."/>
            <person name="Edwards N.J."/>
            <person name="Bolanos R."/>
            <person name="Fasulo D."/>
            <person name="Halldorsson B.V."/>
            <person name="Hannenhalli S."/>
            <person name="Turner R."/>
            <person name="Yooseph S."/>
            <person name="Lu F."/>
            <person name="Nusskern D.R."/>
            <person name="Shue B.C."/>
            <person name="Zheng X.H."/>
            <person name="Zhong F."/>
            <person name="Delcher A.L."/>
            <person name="Huson D.H."/>
            <person name="Kravitz S.A."/>
            <person name="Mouchard L."/>
            <person name="Reinert K."/>
            <person name="Remington K.A."/>
            <person name="Clark A.G."/>
            <person name="Waterman M.S."/>
            <person name="Eichler E.E."/>
            <person name="Adams M.D."/>
            <person name="Hunkapiller M.W."/>
            <person name="Myers E.W."/>
            <person name="Venter J.C."/>
        </authorList>
    </citation>
    <scope>NUCLEOTIDE SEQUENCE [LARGE SCALE GENOMIC DNA]</scope>
</reference>
<reference key="5">
    <citation type="journal article" date="2004" name="Genome Res.">
        <title>The status, quality, and expansion of the NIH full-length cDNA project: the Mammalian Gene Collection (MGC).</title>
        <authorList>
            <consortium name="The MGC Project Team"/>
        </authorList>
    </citation>
    <scope>NUCLEOTIDE SEQUENCE [LARGE SCALE MRNA] (ISOFORM 1)</scope>
    <source>
        <tissue>Pancreas</tissue>
        <tissue>Placenta</tissue>
    </source>
</reference>
<reference key="6">
    <citation type="submission" date="2009-03" db="UniProtKB">
        <authorList>
            <person name="Bienvenut W.V."/>
            <person name="Waridel P."/>
            <person name="Quadroni M."/>
        </authorList>
    </citation>
    <scope>PROTEIN SEQUENCE OF 1-8 AND 44-80</scope>
    <scope>ACETYLATION AT MET-1</scope>
    <scope>IDENTIFICATION BY MASS SPECTROMETRY</scope>
    <source>
        <tissue>Embryonic kidney</tissue>
    </source>
</reference>
<reference key="7">
    <citation type="journal article" date="2000" name="Biochem. Biophys. Res. Commun.">
        <title>Drosophila von Hippel-Lindau tumor suppressor complex possesses E3 ubiquitin ligase activity.</title>
        <authorList>
            <person name="Aso T."/>
            <person name="Yamazaki K."/>
            <person name="Aigaki T."/>
            <person name="Kitajima S."/>
        </authorList>
    </citation>
    <scope>INTERACTION WITH VHL</scope>
</reference>
<reference key="8">
    <citation type="journal article" date="2004" name="Genes Dev.">
        <title>Phosphorylation of a novel SOCS-box regulates assembly of the HIV-1 Vif-Cul5 complex that promotes APOBEC3G degradation.</title>
        <authorList>
            <person name="Mehle A."/>
            <person name="Goncalves J."/>
            <person name="Santa-Marta M."/>
            <person name="McPike M."/>
            <person name="Gabuzda D."/>
        </authorList>
    </citation>
    <scope>INTERACTION WITH HIV VIF (MICROBIAL INFECTION)</scope>
</reference>
<reference key="9">
    <citation type="journal article" date="2006" name="Mol. Cell">
        <title>Structural basis for protein recognition by B30.2/SPRY domains.</title>
        <authorList>
            <person name="Woo J.S."/>
            <person name="Suh H.Y."/>
            <person name="Park S.Y."/>
            <person name="Oh B.H."/>
        </authorList>
    </citation>
    <scope>INTERACTION WITH SPSB1</scope>
</reference>
<reference key="10">
    <citation type="journal article" date="2005" name="J. Biol. Chem.">
        <title>Suppressors of cytokine signaling 4 and 5 regulate epidermal growth factor receptor signaling.</title>
        <authorList>
            <person name="Kario E."/>
            <person name="Marmor M.D."/>
            <person name="Adamsky K."/>
            <person name="Citri A."/>
            <person name="Amit I."/>
            <person name="Amariglio N."/>
            <person name="Rechavi G."/>
            <person name="Yarden Y."/>
        </authorList>
    </citation>
    <scope>FUNCTION IN EGFR DEGRADATION</scope>
    <scope>INTERACTION WITH SOCS5</scope>
</reference>
<reference key="11">
    <citation type="journal article" date="2009" name="Anal. Chem.">
        <title>Lys-N and trypsin cover complementary parts of the phosphoproteome in a refined SCX-based approach.</title>
        <authorList>
            <person name="Gauci S."/>
            <person name="Helbig A.O."/>
            <person name="Slijper M."/>
            <person name="Krijgsveld J."/>
            <person name="Heck A.J."/>
            <person name="Mohammed S."/>
        </authorList>
    </citation>
    <scope>ACETYLATION [LARGE SCALE ANALYSIS] AT MET-1</scope>
    <scope>IDENTIFICATION BY MASS SPECTROMETRY [LARGE SCALE ANALYSIS]</scope>
</reference>
<reference key="12">
    <citation type="journal article" date="2009" name="Proc. Natl. Acad. Sci. U.S.A.">
        <title>Distinct ubiquitin ligases act sequentially for RNA polymerase II polyubiquitylation.</title>
        <authorList>
            <person name="Harreman M."/>
            <person name="Taschner M."/>
            <person name="Sigurdsson S."/>
            <person name="Anindya R."/>
            <person name="Reid J."/>
            <person name="Somesh B."/>
            <person name="Kong S.E."/>
            <person name="Banks C.A."/>
            <person name="Conaway R.C."/>
            <person name="Conaway J.W."/>
            <person name="Svejstrup J.Q."/>
        </authorList>
    </citation>
    <scope>FUNCTION</scope>
    <scope>IDENTIFICATION IN COMPLEX WITH CUL5; ELOA; ELOC AND RBX1</scope>
</reference>
<reference key="13">
    <citation type="journal article" date="2011" name="BMC Syst. Biol.">
        <title>Initial characterization of the human central proteome.</title>
        <authorList>
            <person name="Burkard T.R."/>
            <person name="Planyavsky M."/>
            <person name="Kaupe I."/>
            <person name="Breitwieser F.P."/>
            <person name="Buerckstuemmer T."/>
            <person name="Bennett K.L."/>
            <person name="Superti-Furga G."/>
            <person name="Colinge J."/>
        </authorList>
    </citation>
    <scope>IDENTIFICATION BY MASS SPECTROMETRY [LARGE SCALE ANALYSIS]</scope>
</reference>
<reference key="14">
    <citation type="journal article" date="2011" name="Cell Res.">
        <title>Notch-induced Asb2 expression promotes protein ubiquitination by forming non-canonical E3 ligase complexes.</title>
        <authorList>
            <person name="Nie L."/>
            <person name="Zhao Y."/>
            <person name="Wu W."/>
            <person name="Yang Y.Z."/>
            <person name="Wang H.C."/>
            <person name="Sun X.H."/>
        </authorList>
    </citation>
    <scope>INTERACTION WITH ASB2</scope>
</reference>
<reference key="15">
    <citation type="journal article" date="2011" name="J. Virol.">
        <title>Kaposi's sarcoma-associated herpesvirus-encoded latency-associated nuclear antigen reduces interleukin-8 expression in endothelial cells and impairs neutrophil chemotaxis by degrading nuclear p65.</title>
        <authorList>
            <person name="Li X."/>
            <person name="Liang D."/>
            <person name="Lin X."/>
            <person name="Robertson E.S."/>
            <person name="Lan K."/>
        </authorList>
    </citation>
    <scope>INTERACTION WITH HERPES VIRUS 8 PROTEIN LANA1 (MICROBIAL INFECTION)</scope>
</reference>
<reference key="16">
    <citation type="journal article" date="2010" name="PLoS Pathog.">
        <title>The SOCS-box of HIV-1 Vif interacts with ElonginBC by induced-folding to recruit its Cul5-containing ubiquitin ligase complex.</title>
        <authorList>
            <person name="Bergeron J.R."/>
            <person name="Huthoff H."/>
            <person name="Veselkov D.A."/>
            <person name="Beavil R.L."/>
            <person name="Simpson P.J."/>
            <person name="Matthews S.J."/>
            <person name="Malim M.H."/>
            <person name="Sanderson M.R."/>
        </authorList>
    </citation>
    <scope>FUNCTION (MICROBIAL INFECTION)</scope>
    <scope>IDENTIFICATION IN AN ECS COMPLEX (MICROBIAL INFECTION)</scope>
</reference>
<reference key="17">
    <citation type="journal article" date="2011" name="Nature">
        <title>Vif hijacks CBF-beta to degrade APOBEC3G and promote HIV-1 infection.</title>
        <authorList>
            <person name="Jaeger S."/>
            <person name="Kim D.Y."/>
            <person name="Hultquist J.F."/>
            <person name="Shindo K."/>
            <person name="LaRue R.S."/>
            <person name="Kwon E."/>
            <person name="Li M."/>
            <person name="Anderson B.D."/>
            <person name="Yen L."/>
            <person name="Stanley D."/>
            <person name="Mahon C."/>
            <person name="Kane J."/>
            <person name="Franks-Skiba K."/>
            <person name="Cimermancic P."/>
            <person name="Burlingame A."/>
            <person name="Sali A."/>
            <person name="Craik C.S."/>
            <person name="Harris R.S."/>
            <person name="Gross J.D."/>
            <person name="Krogan N.J."/>
        </authorList>
    </citation>
    <scope>FUNCTION (MICROBIAL INFECTION)</scope>
    <scope>IDENTIFICATION IN AN ECS COMPLEX (MICROBIAL INFECTION)</scope>
</reference>
<reference key="18">
    <citation type="journal article" date="2012" name="EMBO J.">
        <title>Nuclear receptor binding protein 1 regulates intestinal progenitor cell homeostasis and tumour formation.</title>
        <authorList>
            <person name="Wilson C.H."/>
            <person name="Crombie C."/>
            <person name="van der Weyden L."/>
            <person name="Poulogiannis G."/>
            <person name="Rust A.G."/>
            <person name="Pardo M."/>
            <person name="Gracia T."/>
            <person name="Yu L."/>
            <person name="Choudhary J."/>
            <person name="Poulin G.B."/>
            <person name="McIntyre R.E."/>
            <person name="Winton D.J."/>
            <person name="March H.N."/>
            <person name="Arends M.J."/>
            <person name="Fraser A.G."/>
            <person name="Adams D.J."/>
        </authorList>
    </citation>
    <scope>INTERACTION WITH NRBP1</scope>
</reference>
<reference key="19">
    <citation type="journal article" date="2012" name="Mol. Cell">
        <title>The Kelch repeat protein KLHDC10 regulates oxidative stress-induced ASK1 activation by suppressing PP5.</title>
        <authorList>
            <person name="Sekine Y."/>
            <person name="Hatanaka R."/>
            <person name="Watanabe T."/>
            <person name="Sono N."/>
            <person name="Iemura S."/>
            <person name="Natsume T."/>
            <person name="Kuranaga E."/>
            <person name="Miura M."/>
            <person name="Takeda K."/>
            <person name="Ichijo H."/>
        </authorList>
    </citation>
    <scope>INTERACTION WITH KLHDC10</scope>
</reference>
<reference key="20">
    <citation type="journal article" date="2012" name="Nat. Cell Biol.">
        <title>The LIMD1 protein bridges an association between the prolyl hydroxylases and VHL to repress HIF-1 activity.</title>
        <authorList>
            <person name="Foxler D.E."/>
            <person name="Bridge K.S."/>
            <person name="James V."/>
            <person name="Webb T.M."/>
            <person name="Mee M."/>
            <person name="Wong S.C."/>
            <person name="Feng Y."/>
            <person name="Constantin-Teodosiu D."/>
            <person name="Petursdottir T.E."/>
            <person name="Bjornsson J."/>
            <person name="Ingvarsson S."/>
            <person name="Ratcliffe P.J."/>
            <person name="Longmore G.D."/>
            <person name="Sharp T.V."/>
        </authorList>
    </citation>
    <scope>IDENTIFICATION IN A COMPLEX WITH LIMD1; EGLN1/PHD2; VHL AND CUL2</scope>
</reference>
<reference key="21">
    <citation type="journal article" date="2012" name="Proc. Natl. Acad. Sci. U.S.A.">
        <title>N-terminal acetylome analyses and functional insights of the N-terminal acetyltransferase NatB.</title>
        <authorList>
            <person name="Van Damme P."/>
            <person name="Lasa M."/>
            <person name="Polevoda B."/>
            <person name="Gazquez C."/>
            <person name="Elosegui-Artola A."/>
            <person name="Kim D.S."/>
            <person name="De Juan-Pardo E."/>
            <person name="Demeyer K."/>
            <person name="Hole K."/>
            <person name="Larrea E."/>
            <person name="Timmerman E."/>
            <person name="Prieto J."/>
            <person name="Arnesen T."/>
            <person name="Sherman F."/>
            <person name="Gevaert K."/>
            <person name="Aldabe R."/>
        </authorList>
    </citation>
    <scope>ACETYLATION [LARGE SCALE ANALYSIS] AT MET-1</scope>
    <scope>IDENTIFICATION BY MASS SPECTROMETRY [LARGE SCALE ANALYSIS]</scope>
</reference>
<reference key="22">
    <citation type="journal article" date="2014" name="J. Biol. Chem.">
        <title>Protein interaction screening for the ankyrin repeats and suppressor of cytokine signaling (SOCS) box (ASB) family identify Asb11 as a novel endoplasmic reticulum resident ubiquitin ligase.</title>
        <authorList>
            <person name="Andresen C.A."/>
            <person name="Smedegaard S."/>
            <person name="Sylvestersen K.B."/>
            <person name="Svensson C."/>
            <person name="Iglesias-Gato D."/>
            <person name="Cazzamali G."/>
            <person name="Nielsen T.K."/>
            <person name="Nielsen M.L."/>
            <person name="Flores-Morales A."/>
        </authorList>
    </citation>
    <scope>IDENTIFICATION IN THE ECS(ASB11) COMPLEX</scope>
</reference>
<reference key="23">
    <citation type="journal article" date="2014" name="J. Proteomics">
        <title>An enzyme assisted RP-RPLC approach for in-depth analysis of human liver phosphoproteome.</title>
        <authorList>
            <person name="Bian Y."/>
            <person name="Song C."/>
            <person name="Cheng K."/>
            <person name="Dong M."/>
            <person name="Wang F."/>
            <person name="Huang J."/>
            <person name="Sun D."/>
            <person name="Wang L."/>
            <person name="Ye M."/>
            <person name="Zou H."/>
        </authorList>
    </citation>
    <scope>IDENTIFICATION BY MASS SPECTROMETRY [LARGE SCALE ANALYSIS]</scope>
    <source>
        <tissue>Liver</tissue>
    </source>
</reference>
<reference key="24">
    <citation type="journal article" date="2015" name="J. Virol.">
        <title>Poxvirus protein MC132 from molluscum contagiosum virus inhibits NF-B activation by targeting p65 for degradation.</title>
        <authorList>
            <person name="Brady G."/>
            <person name="Haas D.A."/>
            <person name="Farrell P.J."/>
            <person name="Pichlmair A."/>
            <person name="Bowie A.G."/>
        </authorList>
    </citation>
    <scope>INTERACTION WITH MOLLUSCUM CONTAGIOSUM VIRUS PROTEIN MC132 (MICROBIAL INFECTION)</scope>
</reference>
<reference key="25">
    <citation type="journal article" date="2011" name="PLoS ONE">
        <title>The SOCS2 ubiquitin ligase complex regulates growth hormone receptor levels.</title>
        <authorList>
            <person name="Vesterlund M."/>
            <person name="Zadjali F."/>
            <person name="Persson T."/>
            <person name="Nielsen M.L."/>
            <person name="Kessler B.M."/>
            <person name="Norstedt G."/>
            <person name="Flores-Morales A."/>
        </authorList>
    </citation>
    <scope>IDENTIFICATION IN THE ECS(SOCS2) COMPLEX</scope>
</reference>
<reference key="26">
    <citation type="journal article" date="2015" name="J. Biol. Chem.">
        <title>Biophysical studies on interactions and assembly of full-size E3 ubiquitin ligase: suppressor of cytokine signaling 2 (SOCS2)-elongin BC-cullin 5-ring box protein 2 (RBX2).</title>
        <authorList>
            <person name="Bulatov E."/>
            <person name="Martin E.M."/>
            <person name="Chatterjee S."/>
            <person name="Knebel A."/>
            <person name="Shimamura S."/>
            <person name="Konijnenberg A."/>
            <person name="Johnson C."/>
            <person name="Zinn N."/>
            <person name="Grandi P."/>
            <person name="Sobott F."/>
            <person name="Ciulli A."/>
        </authorList>
    </citation>
    <scope>IDENTIFICATION IN THE ECS(SOCS2) COMPLEX</scope>
</reference>
<reference key="27">
    <citation type="journal article" date="2015" name="Science">
        <title>SELENOPROTEINS. CRL2 aids elimination of truncated selenoproteins produced by failed UGA/Sec decoding.</title>
        <authorList>
            <person name="Lin H.C."/>
            <person name="Ho S.C."/>
            <person name="Chen Y.Y."/>
            <person name="Khoo K.H."/>
            <person name="Hsu P.H."/>
            <person name="Yen H.C."/>
        </authorList>
    </citation>
    <scope>FUNCTION</scope>
    <scope>PATHWAY</scope>
</reference>
<reference key="28">
    <citation type="journal article" date="2016" name="J. Cell Sci.">
        <title>Characterization of the mammalian family of DCN-type NEDD8 E3 ligases.</title>
        <authorList>
            <person name="Keuss M.J."/>
            <person name="Thomas Y."/>
            <person name="Mcarthur R."/>
            <person name="Wood N.T."/>
            <person name="Knebel A."/>
            <person name="Kurz T."/>
        </authorList>
    </citation>
    <scope>INTERACTION WITH DCUN1D1; DCUN1D2; DCUN1D3 AND DCUN1D5</scope>
</reference>
<reference key="29">
    <citation type="journal article" date="2018" name="Cell">
        <title>The eukaryotic proteome is shaped by E3 ubiquitin ligases targeting C-terminal degrons.</title>
        <authorList>
            <person name="Koren I."/>
            <person name="Timms R.T."/>
            <person name="Kula T."/>
            <person name="Xu Q."/>
            <person name="Li M.Z."/>
            <person name="Elledge S.J."/>
        </authorList>
    </citation>
    <scope>FUNCTION</scope>
    <scope>PATHWAY</scope>
</reference>
<reference key="30">
    <citation type="journal article" date="2018" name="Mol. Cell">
        <title>C-terminal end-directed protein elimination by CRL2 ubiquitin ligases.</title>
        <authorList>
            <person name="Lin H.C."/>
            <person name="Yeh C.W."/>
            <person name="Chen Y.F."/>
            <person name="Lee T.T."/>
            <person name="Hsieh P.Y."/>
            <person name="Rusnac D.V."/>
            <person name="Lin S.Y."/>
            <person name="Elledge S.J."/>
            <person name="Zheng N."/>
            <person name="Yen H.S."/>
        </authorList>
    </citation>
    <scope>FUNCTION</scope>
    <scope>PATHWAY</scope>
</reference>
<reference key="31">
    <citation type="journal article" date="2019" name="J. Cell Biol.">
        <title>BIK ubiquitination by the E3 ligase Cul5-ASB11 determines cell fate during cellular stress.</title>
        <authorList>
            <person name="Chen F.Y."/>
            <person name="Huang M.Y."/>
            <person name="Lin Y.M."/>
            <person name="Ho C.H."/>
            <person name="Lin S.Y."/>
            <person name="Chen H.Y."/>
            <person name="Hung M.C."/>
            <person name="Chen R.H."/>
        </authorList>
    </citation>
    <scope>IDENTIFICATION IN THE ECS(ASB11) COMPLEX</scope>
</reference>
<reference key="32">
    <citation type="journal article" date="2021" name="Mol. Cell. Proteomics">
        <title>The mechanism of NEDD8 activation of CUL5 Ubiquitin E3 ligases.</title>
        <authorList>
            <person name="Lumpkin R.J."/>
            <person name="Ahmad A.S."/>
            <person name="Blake R."/>
            <person name="Condon C.J."/>
            <person name="Komives E.A."/>
        </authorList>
    </citation>
    <scope>FUNCTION</scope>
    <scope>PATHWAY</scope>
    <scope>IDENTIFICATION IN THE ECS(ASB9) COMPLEX</scope>
</reference>
<reference key="33">
    <citation type="journal article" date="2022" name="Biochemistry">
        <title>Human Protein-l-isoaspartate O-Methyltransferase Domain-Containing Protein 1 (PCMTD1) Associates with Cullin-RING Ligase Proteins.</title>
        <authorList>
            <person name="Warmack R.A."/>
            <person name="Pang E.Z."/>
            <person name="Peluso E."/>
            <person name="Lowenson J.D."/>
            <person name="Ong J.Y."/>
            <person name="Torres J.Z."/>
            <person name="Clarke S.G."/>
        </authorList>
    </citation>
    <scope>IDENTIFICATION IN A E3 UBIQUITIN-PROTEIN LIGASE COMPLEX CONTAINING PCMTD1</scope>
    <scope>INTERACTION WITH PCMTD1</scope>
</reference>
<reference key="34">
    <citation type="journal article" date="2022" name="Life. Sci Alliance">
        <title>Rab40c regulates focal adhesions and PP6 activity by controlling ANKRD28 ubiquitylation.</title>
        <authorList>
            <person name="Han K.J."/>
            <person name="Mikalayeva V."/>
            <person name="Gerber S.A."/>
            <person name="Kettenbach A.N."/>
            <person name="Skeberdis V.A."/>
            <person name="Prekeris R."/>
        </authorList>
    </citation>
    <scope>FUNCTION</scope>
    <scope>IDENTIFICATION IN THE ECS(RAB40C) COMPLEX</scope>
</reference>
<reference key="35">
    <citation type="journal article" date="1999" name="Science">
        <title>Structure of the VHL-ElonginC-ElonginB complex: implications for VHL tumor suppressor function.</title>
        <authorList>
            <person name="Stebbins C.E."/>
            <person name="Kaelin W.G. Jr."/>
            <person name="Pavletich N.P."/>
        </authorList>
    </citation>
    <scope>X-RAY CRYSTALLOGRAPHY (2.7 ANGSTROMS) IN COMPLEX WITH ELOC AND VHL</scope>
    <scope>FUNCTION</scope>
</reference>
<reference key="36">
    <citation type="journal article" date="2002" name="Nature">
        <title>Structural basis for the recognition of hydroxyproline in HIF-1 alpha by pVHL.</title>
        <authorList>
            <person name="Hon W.-C."/>
            <person name="Wilson M.I."/>
            <person name="Harlos K."/>
            <person name="Claridge T.D.W."/>
            <person name="Schofield C.J."/>
            <person name="Pugh C.W."/>
            <person name="Maxwell P.H."/>
            <person name="Ratcliffe P.J."/>
            <person name="Stuart D.I."/>
            <person name="Jones E.Y."/>
        </authorList>
    </citation>
    <scope>X-RAY CRYSTALLOGRAPHY (2.0 ANGSTROMS) COMPLEX WITH ELOC; VHL AND HIF1A</scope>
    <scope>FUNCTION</scope>
</reference>
<reference key="37">
    <citation type="journal article" date="2002" name="Science">
        <title>Structure of an HIF-1alpha-pVHL complex: hydroxyproline recognition in signaling.</title>
        <authorList>
            <person name="Min J.-H."/>
            <person name="Yang H."/>
            <person name="Ivan M."/>
            <person name="Gertler F."/>
            <person name="Kaelin W.G. Jr."/>
            <person name="Pavletich N.P."/>
        </authorList>
    </citation>
    <scope>X-RAY CRYSTALLOGRAPHY (1.85 ANGSTROMS) COMPLEX WITH ELOC; VHL AND HIF1A</scope>
    <scope>FUNCTION</scope>
</reference>
<reference key="38">
    <citation type="journal article" date="2007" name="Structure">
        <title>Structure of the SOCS4-ElonginB/C complex reveals a distinct SOCS box interface and the molecular basis for SOCS-dependent EGFR degradation.</title>
        <authorList>
            <person name="Bullock A.N."/>
            <person name="Rodriguez M.C."/>
            <person name="Debreczeni J.E."/>
            <person name="Songyang Z."/>
            <person name="Knapp S."/>
        </authorList>
    </citation>
    <scope>X-RAY CRYSTALLOGRAPHY (2.55 ANGSTROMS) IN COMPLEX WITH ELOC AND SOX4</scope>
    <scope>SUBUNIT</scope>
</reference>
<reference evidence="55" key="39">
    <citation type="journal article" date="2008" name="J. Virol.">
        <title>Structural insight into the human immunodeficiency virus Vif SOCS box and its role in human E3 ubiquitin ligase assembly.</title>
        <authorList>
            <person name="Stanley B.J."/>
            <person name="Ehrlich E.S."/>
            <person name="Short L."/>
            <person name="Yu Y."/>
            <person name="Xiao Z."/>
            <person name="Yu X.F."/>
            <person name="Xiong Y."/>
        </authorList>
    </citation>
    <scope>X-RAY CRYSTALLOGRAPHY (2.40 ANGSTROMS) IN COMPLEX WITH ELOC AND HIV-1 VIF</scope>
    <scope>FUNCTION (MICROBIAL INFECTION)</scope>
    <scope>IDENTIFICATION IN AN ECS COMPLEX (MICROBIAL INFECTION)</scope>
</reference>
<reference evidence="56" key="40">
    <citation type="journal article" date="2013" name="Biochemistry">
        <title>Multimeric complexes among ankyrin-repeat and SOCS-box protein 9 (ASB9), ElonginBC, and Cullin 5: insights into the structure and assembly of ECS-type Cullin-RING E3 ubiquitin ligases.</title>
        <authorList>
            <person name="Thomas J.C."/>
            <person name="Matak-Vinkovic D."/>
            <person name="Van Molle I."/>
            <person name="Ciulli A."/>
        </authorList>
    </citation>
    <scope>X-RAY CRYSTALLOGRAPHY (2.85 ANGSTROMS) IN COMPLEX WITH ASB9 AND ELOC</scope>
    <scope>IDENTIFICATION IN THE ECS(ASB9) COMPLEX</scope>
</reference>
<reference evidence="54" key="41">
    <citation type="journal article" date="2013" name="Open Biol.">
        <title>Insight into the HIV-1 Vif SOCS-box-ElonginBC interaction.</title>
        <authorList>
            <person name="Lu Z."/>
            <person name="Bergeron J.R."/>
            <person name="Atkinson R.A."/>
            <person name="Schaller T."/>
            <person name="Veselkov D.A."/>
            <person name="Oregioni A."/>
            <person name="Yang Y."/>
            <person name="Matthews S.J."/>
            <person name="Malim M.H."/>
            <person name="Sanderson M.R."/>
        </authorList>
    </citation>
    <scope>STRUCTURE BY NMR OF 139-174 IN COMPLEX WITH ELOC AND HIV-1 VIF</scope>
    <scope>FUNCTION (MICROBIAL INFECTION)</scope>
    <scope>IDENTIFICATION IN AN ECS COMPLEX (MICROBIAL INFECTION)</scope>
</reference>
<reference evidence="57" key="42">
    <citation type="journal article" date="2014" name="Nature">
        <title>Structural basis for hijacking CBF-beta and CUL5 E3 ligase complex by HIV-1 Vif.</title>
        <authorList>
            <person name="Guo Y."/>
            <person name="Dong L."/>
            <person name="Qiu X."/>
            <person name="Wang Y."/>
            <person name="Zhang B."/>
            <person name="Liu H."/>
            <person name="Yu Y."/>
            <person name="Zang Y."/>
            <person name="Yang M."/>
            <person name="Huang Z."/>
        </authorList>
    </citation>
    <scope>X-RAY CRYSTALLOGRAPHY (3.30 ANGSTROMS) OF 1-102 IN COMPLEX WITH CBFB; CUL5; ELOC AND HIV-1 VIF</scope>
    <scope>FUNCTION (MICROBIAL INFECTION)</scope>
    <scope>IDENTIFICATION IN AN ECS COMPLEX (MICROBIAL INFECTION)</scope>
</reference>
<reference evidence="58 59 60" key="43">
    <citation type="journal article" date="2019" name="Nat. Commun.">
        <title>Structural insights into substrate recognition by the SOCS2 E3 ubiquitin ligase.</title>
        <authorList>
            <person name="Kung W.W."/>
            <person name="Ramachandran S."/>
            <person name="Makukhin N."/>
            <person name="Bruno E."/>
            <person name="Ciulli A."/>
        </authorList>
    </citation>
    <scope>X-RAY CRYSTALLOGRAPHY (1.98 ANGSTROMS) OF 1-104 IN COMPLEX WITH SOCS2 AND ELOC</scope>
    <scope>IDENTIFICATION IN THE ECS(SOCS2) COMPLEX</scope>
</reference>
<reference evidence="61" key="44">
    <citation type="journal article" date="2020" name="Nat. Commun.">
        <title>Structure and dynamics of the ASB9 CUL-RING E3 ligase.</title>
        <authorList>
            <person name="Lumpkin R.J."/>
            <person name="Baker R.W."/>
            <person name="Leschziner A.E."/>
            <person name="Komives E.A."/>
        </authorList>
    </citation>
    <scope>STRUCTURE BY ELECTRON MICROSCOPY (4.10 ANGSTROMS) IN COMPLEX WITH CKB; ASB9 AND ELOC</scope>
    <scope>IDENTIFICATION IN THE ECS(ASB9) COMPLEX</scope>
</reference>
<reference evidence="62" key="45">
    <citation type="journal article" date="2021" name="Nat. Commun.">
        <title>Discovery of an exosite on the SOCS2-SH2 domain that enhances SH2 binding to phosphorylated ligands.</title>
        <authorList>
            <person name="Linossi E.M."/>
            <person name="Li K."/>
            <person name="Veggiani G."/>
            <person name="Tan C."/>
            <person name="Dehkhoda F."/>
            <person name="Hockings C."/>
            <person name="Calleja D.J."/>
            <person name="Keating N."/>
            <person name="Feltham R."/>
            <person name="Brooks A.J."/>
            <person name="Li S.S."/>
            <person name="Sidhu S.S."/>
            <person name="Babon J.J."/>
            <person name="Kershaw N.J."/>
            <person name="Nicholson S.E."/>
        </authorList>
    </citation>
    <scope>X-RAY CRYSTALLOGRAPHY (3.19 ANGSTROMS) OF 1-118 IN COMPLEX WITH SOCS2 AND ELOC</scope>
    <scope>IDENTIFICATION IN THE ECS(SOCS2) COMPLEX</scope>
</reference>
<reference evidence="63" key="46">
    <citation type="journal article" date="2021" name="Nature">
        <title>A conserved mechanism for regulating replisome disassembly in eukaryotes.</title>
        <authorList>
            <person name="Jenkyn-Bedford M."/>
            <person name="Jones M.L."/>
            <person name="Baris Y."/>
            <person name="Labib K.P.M."/>
            <person name="Cannone G."/>
            <person name="Yeeles J.T.P."/>
            <person name="Deegan T.D."/>
        </authorList>
    </citation>
    <scope>STRUCTURE BY ELECTRON MICROSCOPY (2.80 ANGSTROMS) IN COMPLEX WITH REPLISOME AND DNA POLYMERASE EPSILON</scope>
    <scope>SUBCELLULAR LOCATION</scope>
    <scope>SUBUNIT</scope>
</reference>
<reference evidence="73" key="47">
    <citation type="journal article" date="2023" name="Mol. Cell">
        <title>E3 ligase autoinhibition by C-degron mimicry maintains C-degron substrate fidelity.</title>
        <authorList>
            <person name="Scott D.C."/>
            <person name="King M.T."/>
            <person name="Baek K."/>
            <person name="Gee C.T."/>
            <person name="Kalathur R."/>
            <person name="Li J."/>
            <person name="Purser N."/>
            <person name="Nourse A."/>
            <person name="Chai S.C."/>
            <person name="Vaithiyalingam S."/>
            <person name="Chen T."/>
            <person name="Lee R.E."/>
            <person name="Elledge S.J."/>
            <person name="Kleiger G."/>
            <person name="Schulman B.A."/>
        </authorList>
    </citation>
    <scope>X-RAY CRYSTALLOGRAPHY (2.60 ANGSTROMS) IN COMPLEX WITH KLHDC2 AND ELOC</scope>
    <scope>FUNCTION</scope>
    <scope>INTERACTION WITH KLHDC2; KLHDC3 AND ELOC</scope>
</reference>
<reference evidence="70 71 72" key="48">
    <citation type="journal article" date="2023" name="Nature">
        <title>The structural basis for HIV-1 Vif antagonism of human APOBEC3G.</title>
        <authorList>
            <person name="Li Y.L."/>
            <person name="Langley C.A."/>
            <person name="Azumaya C.M."/>
            <person name="Echeverria I."/>
            <person name="Chesarino N.M."/>
            <person name="Emerman M."/>
            <person name="Cheng Y."/>
            <person name="Gross J.D."/>
        </authorList>
    </citation>
    <scope>STRUCTURE BY ELECTRON MICROSCOPY (2.70 ANGSTROMS) IN COMPLEX WITH CBFB; CUL5; APOBEC3G; ELOC AND HIV-1 VIF</scope>
    <scope>FUNCTION (MICROBIAL INFECTION)</scope>
    <scope>IDENTIFICATION IN AN ECS COMPLEX (MICROBIAL INFECTION)</scope>
</reference>
<reference evidence="64 65 66 67 68 69" key="49">
    <citation type="journal article" date="2023" name="Nat. Commun.">
        <title>Structure-based design of a phosphotyrosine-masked covalent ligand targeting the E3 ligase SOCS2.</title>
        <authorList>
            <person name="Ramachandran S."/>
            <person name="Makukhin N."/>
            <person name="Haubrich K."/>
            <person name="Nagala M."/>
            <person name="Forrester B."/>
            <person name="Lynch D.M."/>
            <person name="Casement R."/>
            <person name="Testa A."/>
            <person name="Bruno E."/>
            <person name="Gitto R."/>
            <person name="Ciulli A."/>
        </authorList>
    </citation>
    <scope>X-RAY CRYSTALLOGRAPHY (1.79 ANGSTROMS) IN COMPLEX WITH SOCS2 AND ELOC</scope>
    <scope>IDENTIFICATION IN THE ECS(SOCS2) COMPLEX</scope>
</reference>
<reference evidence="74 75" key="50">
    <citation type="journal article" date="2023" name="Nat. Commun.">
        <title>Structural basis of HIV-1 Vif-mediated E3 ligase targeting of host APOBEC3H.</title>
        <authorList>
            <person name="Ito F."/>
            <person name="Alvarez-Cabrera A.L."/>
            <person name="Kim K."/>
            <person name="Zhou Z.H."/>
            <person name="Chen X.S."/>
        </authorList>
    </citation>
    <scope>STRUCTURE BY ELECTRON MICROSCOPY (3.24 ANGSTROMS) OF 1-102 IN COMPLEX WITH APOBEC3H; CUL5; ELOC; CBFB AND HIV-1 VIF</scope>
    <scope>FUNCTION (MICROBIAL INFECTION)</scope>
    <scope>IDENTIFICATION IN AN ECS COMPLEX (MICROBIAL INFECTION)</scope>
</reference>
<reference evidence="76 77" key="51">
    <citation type="journal article" date="2024" name="Nature">
        <title>The CRL5-SPSB3 ubiquitin ligase targets nuclear cGAS for degradation.</title>
        <authorList>
            <person name="Xu P."/>
            <person name="Liu Y."/>
            <person name="Liu C."/>
            <person name="Guey B."/>
            <person name="Li L."/>
            <person name="Melenec P."/>
            <person name="Ricci J."/>
            <person name="Ablasser A."/>
        </authorList>
    </citation>
    <scope>STRUCTURE BY ELECTRON MICROSCOPY (3.50 ANGSTROMS) IN COMPLEX WITH SPSB3; ELOC AND CGAS</scope>
    <scope>IDENTIFICATION IN THE ECS(SPSB3) COMPLEX</scope>
</reference>
<reference evidence="80 81 82 83" key="52">
    <citation type="journal article" date="2024" name="Nat. Commun.">
        <title>Structural basis for C-degron selectivity across KLHDCX family E3 ubiquitin ligases.</title>
        <authorList>
            <person name="Scott D.C."/>
            <person name="Chittori S."/>
            <person name="Purser N."/>
            <person name="King M.T."/>
            <person name="Maiwald S.A."/>
            <person name="Churion K."/>
            <person name="Nourse A."/>
            <person name="Lee C."/>
            <person name="Paulo J.A."/>
            <person name="Miller D.J."/>
            <person name="Elledge S.J."/>
            <person name="Harper J.W."/>
            <person name="Kleiger G."/>
            <person name="Schulman B.A."/>
        </authorList>
    </citation>
    <scope>X-RAY CRYSTALLOGRAPHY (1.88 ANGSTROMS) OF 1-104 IN COMPLEX WITH KLHDC3; ELOC AND UBIQUITIN</scope>
    <scope>STRUCTURE BY ELECTRON MICROSCOPY (3.20 ANGSTROMS) IN COMPLEX WITH KLHDC10; ELOC AND UBIQUITIN</scope>
</reference>
<reference evidence="79" key="53">
    <citation type="journal article" date="2024" name="Nat. Struct. Mol. Biol.">
        <title>Co-opting the E3 ligase KLHDC2 for targeted protein degradation by small molecules.</title>
        <authorList>
            <person name="Hickey C.M."/>
            <person name="Digianantonio K.M."/>
            <person name="Zimmermann K."/>
            <person name="Harbin A."/>
            <person name="Quinn C."/>
            <person name="Patel A."/>
            <person name="Gareiss P."/>
            <person name="Chapman A."/>
            <person name="Tiberi B."/>
            <person name="Dobrodziej J."/>
            <person name="Corradi J."/>
            <person name="Cacace A.M."/>
            <person name="Langley D.R."/>
            <person name="Bekes M."/>
        </authorList>
    </citation>
    <scope>X-RAY CRYSTALLOGRAPHY (1.42 ANGSTROMS) IN COMPLEX WITH KLHDC2 AND ELOC</scope>
    <scope>FUNCTION</scope>
    <scope>INTERACTION WITH KLHDC2; KLHDC3 AND ELOC</scope>
</reference>
<reference evidence="78" key="54">
    <citation type="journal article" date="2024" name="Nat. Struct. Mol. Biol.">
        <title>Mechanism of millisecond Lys48-linked poly-ubiquitin chain formation by cullin-RING ligases.</title>
        <authorList>
            <person name="Liwocha J."/>
            <person name="Li J."/>
            <person name="Purser N."/>
            <person name="Rattanasopa C."/>
            <person name="Maiwald S."/>
            <person name="Krist D.T."/>
            <person name="Scott D.C."/>
            <person name="Steigenberger B."/>
            <person name="Prabu J.R."/>
            <person name="Schulman B.A."/>
            <person name="Kleiger G."/>
        </authorList>
    </citation>
    <scope>STRUCTURE BY ELECTRON MICROSCOPY (3.76 ANGSTROMS) OF CRL2(FEM1C) COMPLEX IN COMPLEX WITH UBE2R2</scope>
    <scope>FUNCTION</scope>
    <scope>PATHWAY</scope>
    <scope>SUBUNIT</scope>
</reference>
<name>ELOB_HUMAN</name>
<accession>Q15370</accession>
<accession>B7WPD3</accession>
<organism>
    <name type="scientific">Homo sapiens</name>
    <name type="common">Human</name>
    <dbReference type="NCBI Taxonomy" id="9606"/>
    <lineage>
        <taxon>Eukaryota</taxon>
        <taxon>Metazoa</taxon>
        <taxon>Chordata</taxon>
        <taxon>Craniata</taxon>
        <taxon>Vertebrata</taxon>
        <taxon>Euteleostomi</taxon>
        <taxon>Mammalia</taxon>
        <taxon>Eutheria</taxon>
        <taxon>Euarchontoglires</taxon>
        <taxon>Primates</taxon>
        <taxon>Haplorrhini</taxon>
        <taxon>Catarrhini</taxon>
        <taxon>Hominidae</taxon>
        <taxon>Homo</taxon>
    </lineage>
</organism>
<gene>
    <name evidence="53" type="primary">ELOB</name>
    <name type="synonym">TCEB2</name>
</gene>
<sequence>MDVFLMIRRHKTTIFTDAKESSTVFELKRIVEGILKRPPDEQRLYKDDQLLDDGKTLGECGFTSQTARPQAPATVGLAFRADDTFEALCIEPFSSPPELPDVMKPQDSGSSANEQAVQ</sequence>
<protein>
    <recommendedName>
        <fullName evidence="48">Elongin-B</fullName>
        <shortName>EloB</shortName>
    </recommendedName>
    <alternativeName>
        <fullName>Elongin 18 kDa subunit</fullName>
    </alternativeName>
    <alternativeName>
        <fullName>RNA polymerase II transcription factor SIII subunit B</fullName>
    </alternativeName>
    <alternativeName>
        <fullName evidence="49">SIII p18</fullName>
    </alternativeName>
    <alternativeName>
        <fullName>Transcription elongation factor B polypeptide 2</fullName>
    </alternativeName>
</protein>
<feature type="chain" id="PRO_0000114914" description="Elongin-B">
    <location>
        <begin position="1"/>
        <end position="118"/>
    </location>
</feature>
<feature type="domain" description="Ubiquitin-like" evidence="2">
    <location>
        <begin position="1"/>
        <end position="66"/>
    </location>
</feature>
<feature type="region of interest" description="Disordered" evidence="3">
    <location>
        <begin position="92"/>
        <end position="118"/>
    </location>
</feature>
<feature type="compositionally biased region" description="Polar residues" evidence="3">
    <location>
        <begin position="107"/>
        <end position="118"/>
    </location>
</feature>
<feature type="modified residue" description="N-acetylmethionine" evidence="47 84 85">
    <location>
        <position position="1"/>
    </location>
</feature>
<feature type="modified residue" description="Phosphothreonine" evidence="1">
    <location>
        <position position="84"/>
    </location>
</feature>
<feature type="modified residue" description="Phosphoserine" evidence="1">
    <location>
        <position position="108"/>
    </location>
</feature>
<feature type="modified residue" description="Phosphoserine" evidence="1">
    <location>
        <position position="111"/>
    </location>
</feature>
<feature type="splice variant" id="VSP_045784" description="In isoform 2." evidence="50">
    <original>Q</original>
    <variation>HLHVHSQTMAKSRNTSWSQCPGLTACSTREPQDGPTQVHPRWGL</variation>
    <location>
        <position position="118"/>
    </location>
</feature>
<feature type="strand" evidence="90">
    <location>
        <begin position="2"/>
        <end position="10"/>
    </location>
</feature>
<feature type="strand" evidence="90">
    <location>
        <begin position="12"/>
        <end position="19"/>
    </location>
</feature>
<feature type="strand" evidence="91">
    <location>
        <begin position="20"/>
        <end position="23"/>
    </location>
</feature>
<feature type="helix" evidence="90">
    <location>
        <begin position="24"/>
        <end position="35"/>
    </location>
</feature>
<feature type="helix" evidence="90">
    <location>
        <begin position="39"/>
        <end position="41"/>
    </location>
</feature>
<feature type="strand" evidence="90">
    <location>
        <begin position="42"/>
        <end position="46"/>
    </location>
</feature>
<feature type="strand" evidence="89">
    <location>
        <begin position="49"/>
        <end position="51"/>
    </location>
</feature>
<feature type="strand" evidence="92">
    <location>
        <begin position="53"/>
        <end position="56"/>
    </location>
</feature>
<feature type="helix" evidence="90">
    <location>
        <begin position="57"/>
        <end position="60"/>
    </location>
</feature>
<feature type="turn" evidence="90">
    <location>
        <begin position="64"/>
        <end position="66"/>
    </location>
</feature>
<feature type="strand" evidence="92">
    <location>
        <begin position="69"/>
        <end position="71"/>
    </location>
</feature>
<feature type="strand" evidence="90">
    <location>
        <begin position="73"/>
        <end position="81"/>
    </location>
</feature>
<feature type="strand" evidence="86">
    <location>
        <begin position="82"/>
        <end position="84"/>
    </location>
</feature>
<feature type="helix" evidence="88">
    <location>
        <begin position="86"/>
        <end position="89"/>
    </location>
</feature>
<feature type="turn" evidence="88">
    <location>
        <begin position="92"/>
        <end position="94"/>
    </location>
</feature>
<feature type="strand" evidence="87">
    <location>
        <begin position="96"/>
        <end position="98"/>
    </location>
</feature>
<feature type="helix" evidence="90">
    <location>
        <begin position="101"/>
        <end position="103"/>
    </location>
</feature>
<feature type="strand" evidence="87">
    <location>
        <begin position="110"/>
        <end position="112"/>
    </location>
</feature>
<comment type="function">
    <text evidence="1 46">SIII, also known as elongin, is a general transcription elongation factor that increases the RNA polymerase II transcription elongation past template-encoded arresting sites. Subunit A is transcriptionally active and its transcription activity is strongly enhanced by binding to the dimeric complex of the SIII regulatory subunits B and C (elongin BC complex) (PubMed:7638163). In embryonic stem cells, the elongin BC complex is recruited by EPOP to Polycomb group (PcG) target genes in order generate genomic region that display both active and repressive chromatin properties, an important feature of pluripotent stem cells (By similarity).</text>
</comment>
<comment type="function">
    <text evidence="1 4 6 7 9 27 29 30 34 38 40 43">Core component of multiple cullin-2 and cullin-5-RING E3 ubiquitin-protein ligase complexes (ECS complexes), which mediate the ubiquitination of target proteins (PubMed:10205047, PubMed:12004076, PubMed:12050673, PubMed:15590694, PubMed:26138980, PubMed:29775578, PubMed:29779948, PubMed:33268465, PubMed:38326650, PubMed:35512830). By binding to BC-box motifs it seems to link target recruitment subunits, like VHL and members of the SOCS box family, to Cullin/RBX1 modules that activate E2 ubiquitination enzymes (PubMed:10205047, PubMed:12004076, PubMed:12050673, PubMed:15590694). Component the von Hippel-Lindau ubiquitination complex CBC(VHL) (PubMed:10205047, PubMed:12004076, PubMed:12050673, PubMed:15590694). A number of ECS complexes (containing either KLHDC2, KLHDC3, KLHDC10, APPBP2, FEM1A, FEM1B or FEM1C as substrate-recognition component) are part of the DesCEND (destruction via C-end degrons) pathway, which recognizes a C-degron located at the extreme C terminus of target proteins, leading to their ubiquitination and degradation (PubMed:26138980, PubMed:29775578, PubMed:29779948, PubMed:36805027, PubMed:38177675). The ECS(ASB9) complex mediates ubiquitination and degradation of CKB (PubMed:33268465). As part of a multisubunit ubiquitin ligase complex, polyubiquitinates monoubiquitinated POLR2A (PubMed:19920177). ECS(LRR1) ubiquitinates MCM7 and promotes CMG replisome disassembly by VCP and chromatin extraction during S-phase (By similarity). As part of the ECS(RAB40C) complex, mediates ANKRD28 ubiquitination and degradation, thereby inhibiting protein phosphatase 6 (PP6) complex activity and focal adhesion assembly during cell migration (PubMed:35512830).</text>
</comment>
<comment type="function">
    <text evidence="12 14 17 22 24 39 41">(Microbial infection) Following infection by HIV-1 virus, component of a cullin-5-RING E3 ubiquitin-protein ligase complex (ECS complex) hijacked by the HIV-1 Vif protein, which catalyzes ubiquitination and degradation of APOBEC3F and APOBEC3G (PubMed:18562529, PubMed:20532212, PubMed:22190037, PubMed:24225024, PubMed:24402281, PubMed:36754086). The complex can also ubiquitinate APOBEC3H to some extent (PubMed:37640699).</text>
</comment>
<comment type="pathway">
    <text evidence="27 29 30 34 44">Protein modification; protein ubiquitination.</text>
</comment>
<comment type="subunit">
    <text evidence="1 4 5 9 10 11 13 16 18 19 20 21 23 25 27 28 29 30 31 32 33 34 35 36 37 38 40 42 43 45">Heterotrimer of an A (ELOA, ELOA2 or ELOA3P), ELOB and ELOC subunit (PubMed:10205047, PubMed:17997974). The elongin BC complex interacts with EPOP; leading to recruit the elongin BC complex to Polycomb group (PcG) target genes, thereby restricting excessive activity of the PRC2/EED-EZH2 complex (By similarity). Component of multiple cullin-RING E3 ubiquitin-protein ligase complexes composed of Elongin BC (ELOB and ELOC), a cullin (either CUL2 or CUL5), a catalytic subunit (either RBX1 or RNF7/RBX2), as well as a substrate adapter protein that can be either ASB2, ASB9, ASB11, KLHDC2, KLHDC3, KLHDC10, APPBP2, FEM1A, FEM1B, FEM1C, LRR1, PCMTD1, SOCS1, SOCS2, SOCS5, SPSB1, SPSB3, ELOA, VHL, WSB1 or RAB40C (PubMed:10205047, PubMed:11006129, PubMed:15590694, PubMed:17189197, PubMed:19920177, PubMed:21980433, PubMed:22286099, PubMed:23102700, PubMed:23837592, PubMed:24337577, PubMed:25505247, PubMed:26138980, PubMed:29775578, PubMed:29779948, PubMed:31182716, PubMed:31387940, PubMed:32513959, PubMed:33268465, PubMed:34700328, PubMed:34857742, PubMed:35486881, PubMed:37816714, PubMed:38418882, PubMed:38326650, PubMed:35512830). As part of the Elongin BC E3 ubiquitin ligase complex; interacts with NRBP1 (PubMed:22510880). May also interact with DCUN1D1, DCUN1D2, DCUN1D3 and DCUN1D5 (PubMed:26906416). May form oligomers as a KLHDC2/KLHDC3-ELOB-ELOC complex; this interaction is autoinhibitory for the E3 ligase complex as the substrate-binding site of KLHDC2/KLHDC3 is blocked in the oligomer (PubMed:36805027, PubMed:38177675).</text>
</comment>
<comment type="subunit">
    <text evidence="12 14 17 22 24 41">(Microbial infection) Following infection by HIV-1 virus, component of a cullin-5-RING E3 ubiquitin-protein ligase complex (ECS complex) hijacked by the HIV-1 Vif protein.</text>
</comment>
<comment type="subunit">
    <text evidence="8">(Microbial infection) Substrate adapter protein can be a viral protein such as HIV Vif.</text>
</comment>
<comment type="subunit">
    <text evidence="26">(Microbial infection) Interacts with molluscum contagiosum virus MC132.</text>
</comment>
<comment type="subunit">
    <text evidence="15">(Microbial infection) Interacts with herpes virus 8 virus protein LANA1.</text>
</comment>
<comment type="interaction">
    <interactant intactId="EBI-301238">
        <id>Q15370</id>
    </interactant>
    <interactant intactId="EBI-301231">
        <id>Q15369</id>
        <label>ELOC</label>
    </interactant>
    <organismsDiffer>false</organismsDiffer>
    <experiments>20</experiments>
</comment>
<comment type="interaction">
    <interactant intactId="EBI-301238">
        <id>Q15370</id>
    </interactant>
    <interactant intactId="EBI-394405">
        <id>Q96G25</id>
        <label>MED8</label>
    </interactant>
    <organismsDiffer>false</organismsDiffer>
    <experiments>5</experiments>
</comment>
<comment type="interaction">
    <interactant intactId="EBI-301238">
        <id>Q15370</id>
    </interactant>
    <interactant intactId="EBI-2513715">
        <id>Q96EL3</id>
        <label>MRPL53</label>
    </interactant>
    <organismsDiffer>false</organismsDiffer>
    <experiments>5</experiments>
</comment>
<comment type="interaction">
    <interactant intactId="EBI-301238">
        <id>Q15370</id>
    </interactant>
    <interactant intactId="EBI-779991">
        <id>P12504</id>
        <label>vif</label>
    </interactant>
    <organismsDiffer>true</organismsDiffer>
    <experiments>5</experiments>
</comment>
<comment type="subcellular location">
    <subcellularLocation>
        <location evidence="52">Nucleus</location>
    </subcellularLocation>
</comment>
<comment type="alternative products">
    <event type="alternative splicing"/>
    <isoform>
        <id>Q15370-1</id>
        <name>1</name>
        <sequence type="displayed"/>
    </isoform>
    <isoform>
        <id>Q15370-2</id>
        <name>2</name>
        <sequence type="described" ref="VSP_045784"/>
    </isoform>
</comment>
<comment type="similarity">
    <text evidence="51">Belongs to the Elongin B family.</text>
</comment>
<comment type="sequence caution" evidence="51">
    <conflict type="erroneous gene model prediction">
        <sequence resource="EMBL-CDS" id="AAC08452"/>
    </conflict>
</comment>